<dbReference type="EC" id="2.7.11.1"/>
<dbReference type="EC" id="2.7.10.2"/>
<dbReference type="EMBL" id="AB183427">
    <property type="protein sequence ID" value="BAF73615.1"/>
    <property type="molecule type" value="mRNA"/>
</dbReference>
<dbReference type="EMBL" id="AB183428">
    <property type="protein sequence ID" value="BAF73616.1"/>
    <property type="molecule type" value="mRNA"/>
</dbReference>
<dbReference type="EMBL" id="D79997">
    <property type="protein sequence ID" value="BAA11492.2"/>
    <property type="status" value="ALT_INIT"/>
    <property type="molecule type" value="mRNA"/>
</dbReference>
<dbReference type="EMBL" id="AK293284">
    <property type="protein sequence ID" value="BAH11482.1"/>
    <property type="molecule type" value="mRNA"/>
</dbReference>
<dbReference type="EMBL" id="AK293447">
    <property type="protein sequence ID" value="BAH11508.1"/>
    <property type="molecule type" value="mRNA"/>
</dbReference>
<dbReference type="EMBL" id="AK299164">
    <property type="protein sequence ID" value="BAH12961.1"/>
    <property type="molecule type" value="mRNA"/>
</dbReference>
<dbReference type="EMBL" id="AK300761">
    <property type="protein sequence ID" value="BAH13343.1"/>
    <property type="molecule type" value="mRNA"/>
</dbReference>
<dbReference type="EMBL" id="AK300821">
    <property type="protein sequence ID" value="BAH13354.1"/>
    <property type="molecule type" value="mRNA"/>
</dbReference>
<dbReference type="EMBL" id="AK301131">
    <property type="protein sequence ID" value="BAH13416.1"/>
    <property type="molecule type" value="mRNA"/>
</dbReference>
<dbReference type="EMBL" id="AK302374">
    <property type="protein sequence ID" value="BAH13687.1"/>
    <property type="molecule type" value="mRNA"/>
</dbReference>
<dbReference type="EMBL" id="AL354932">
    <property type="status" value="NOT_ANNOTATED_CDS"/>
    <property type="molecule type" value="Genomic_DNA"/>
</dbReference>
<dbReference type="EMBL" id="AL442063">
    <property type="status" value="NOT_ANNOTATED_CDS"/>
    <property type="molecule type" value="Genomic_DNA"/>
</dbReference>
<dbReference type="EMBL" id="CH471071">
    <property type="protein sequence ID" value="EAW58303.1"/>
    <property type="molecule type" value="Genomic_DNA"/>
</dbReference>
<dbReference type="EMBL" id="CH471071">
    <property type="protein sequence ID" value="EAW58304.1"/>
    <property type="molecule type" value="Genomic_DNA"/>
</dbReference>
<dbReference type="EMBL" id="BC014039">
    <property type="protein sequence ID" value="AAH14039.1"/>
    <property type="molecule type" value="mRNA"/>
</dbReference>
<dbReference type="CCDS" id="CCDS59123.1">
    <molecule id="Q14680-7"/>
</dbReference>
<dbReference type="CCDS" id="CCDS59124.1">
    <molecule id="Q14680-8"/>
</dbReference>
<dbReference type="CCDS" id="CCDS59125.1">
    <molecule id="Q14680-2"/>
</dbReference>
<dbReference type="CCDS" id="CCDS59126.1">
    <molecule id="Q14680-6"/>
</dbReference>
<dbReference type="CCDS" id="CCDS59127.1">
    <molecule id="Q14680-5"/>
</dbReference>
<dbReference type="CCDS" id="CCDS59128.1">
    <molecule id="Q14680-4"/>
</dbReference>
<dbReference type="CCDS" id="CCDS6606.1">
    <molecule id="Q14680-1"/>
</dbReference>
<dbReference type="RefSeq" id="NP_001243614.1">
    <molecule id="Q14680-7"/>
    <property type="nucleotide sequence ID" value="NM_001256685.2"/>
</dbReference>
<dbReference type="RefSeq" id="NP_001243616.1">
    <molecule id="Q14680-8"/>
    <property type="nucleotide sequence ID" value="NM_001256687.2"/>
</dbReference>
<dbReference type="RefSeq" id="NP_001243617.1">
    <molecule id="Q14680-2"/>
    <property type="nucleotide sequence ID" value="NM_001256688.2"/>
</dbReference>
<dbReference type="RefSeq" id="NP_001243618.1">
    <molecule id="Q14680-6"/>
    <property type="nucleotide sequence ID" value="NM_001256689.2"/>
</dbReference>
<dbReference type="RefSeq" id="NP_001243619.1">
    <molecule id="Q14680-5"/>
    <property type="nucleotide sequence ID" value="NM_001256690.2"/>
</dbReference>
<dbReference type="RefSeq" id="NP_001243621.1">
    <molecule id="Q14680-4"/>
    <property type="nucleotide sequence ID" value="NM_001256692.2"/>
</dbReference>
<dbReference type="RefSeq" id="NP_001243622.1">
    <molecule id="Q14680-3"/>
    <property type="nucleotide sequence ID" value="NM_001256693.2"/>
</dbReference>
<dbReference type="RefSeq" id="NP_055606.1">
    <molecule id="Q14680-1"/>
    <property type="nucleotide sequence ID" value="NM_014791.4"/>
</dbReference>
<dbReference type="RefSeq" id="XP_011516378.1">
    <molecule id="Q14680-1"/>
    <property type="nucleotide sequence ID" value="XM_011518076.3"/>
</dbReference>
<dbReference type="RefSeq" id="XP_011516379.1">
    <molecule id="Q14680-1"/>
    <property type="nucleotide sequence ID" value="XM_011518077.2"/>
</dbReference>
<dbReference type="RefSeq" id="XP_011516380.1">
    <property type="nucleotide sequence ID" value="XM_011518078.2"/>
</dbReference>
<dbReference type="RefSeq" id="XP_011516381.1">
    <property type="nucleotide sequence ID" value="XM_011518079.1"/>
</dbReference>
<dbReference type="RefSeq" id="XP_011516383.1">
    <molecule id="Q14680-6"/>
    <property type="nucleotide sequence ID" value="XM_011518081.3"/>
</dbReference>
<dbReference type="RefSeq" id="XP_011516384.1">
    <molecule id="Q14680-6"/>
    <property type="nucleotide sequence ID" value="XM_011518082.3"/>
</dbReference>
<dbReference type="RefSeq" id="XP_011516385.1">
    <property type="nucleotide sequence ID" value="XM_011518083.2"/>
</dbReference>
<dbReference type="RefSeq" id="XP_011516386.1">
    <property type="nucleotide sequence ID" value="XM_011518084.2"/>
</dbReference>
<dbReference type="RefSeq" id="XP_047280122.1">
    <molecule id="Q14680-1"/>
    <property type="nucleotide sequence ID" value="XM_047424166.1"/>
</dbReference>
<dbReference type="RefSeq" id="XP_047280126.1">
    <molecule id="Q14680-7"/>
    <property type="nucleotide sequence ID" value="XM_047424170.1"/>
</dbReference>
<dbReference type="RefSeq" id="XP_047280127.1">
    <molecule id="Q14680-7"/>
    <property type="nucleotide sequence ID" value="XM_047424171.1"/>
</dbReference>
<dbReference type="RefSeq" id="XP_047280128.1">
    <molecule id="Q14680-8"/>
    <property type="nucleotide sequence ID" value="XM_047424172.1"/>
</dbReference>
<dbReference type="RefSeq" id="XP_047280129.1">
    <molecule id="Q14680-8"/>
    <property type="nucleotide sequence ID" value="XM_047424173.1"/>
</dbReference>
<dbReference type="RefSeq" id="XP_054220272.1">
    <molecule id="Q14680-1"/>
    <property type="nucleotide sequence ID" value="XM_054364297.1"/>
</dbReference>
<dbReference type="RefSeq" id="XP_054220273.1">
    <molecule id="Q14680-1"/>
    <property type="nucleotide sequence ID" value="XM_054364298.1"/>
</dbReference>
<dbReference type="RefSeq" id="XP_054220274.1">
    <molecule id="Q14680-1"/>
    <property type="nucleotide sequence ID" value="XM_054364299.1"/>
</dbReference>
<dbReference type="RefSeq" id="XP_054220278.1">
    <molecule id="Q14680-6"/>
    <property type="nucleotide sequence ID" value="XM_054364303.1"/>
</dbReference>
<dbReference type="RefSeq" id="XP_054220279.1">
    <molecule id="Q14680-6"/>
    <property type="nucleotide sequence ID" value="XM_054364304.1"/>
</dbReference>
<dbReference type="RefSeq" id="XP_054220280.1">
    <molecule id="Q14680-7"/>
    <property type="nucleotide sequence ID" value="XM_054364305.1"/>
</dbReference>
<dbReference type="RefSeq" id="XP_054220281.1">
    <molecule id="Q14680-7"/>
    <property type="nucleotide sequence ID" value="XM_054364306.1"/>
</dbReference>
<dbReference type="RefSeq" id="XP_054220282.1">
    <molecule id="Q14680-8"/>
    <property type="nucleotide sequence ID" value="XM_054364307.1"/>
</dbReference>
<dbReference type="RefSeq" id="XP_054220283.1">
    <molecule id="Q14680-8"/>
    <property type="nucleotide sequence ID" value="XM_054364308.1"/>
</dbReference>
<dbReference type="PDB" id="4BKY">
    <property type="method" value="X-ray"/>
    <property type="resolution" value="1.83 A"/>
    <property type="chains" value="A=2-340"/>
</dbReference>
<dbReference type="PDB" id="4BKZ">
    <property type="method" value="X-ray"/>
    <property type="resolution" value="2.20 A"/>
    <property type="chains" value="A=2-340"/>
</dbReference>
<dbReference type="PDB" id="4BL1">
    <property type="method" value="X-ray"/>
    <property type="resolution" value="2.60 A"/>
    <property type="chains" value="A=2-340"/>
</dbReference>
<dbReference type="PDB" id="4D2P">
    <property type="method" value="X-ray"/>
    <property type="resolution" value="2.55 A"/>
    <property type="chains" value="A/B/C/D=1-336"/>
</dbReference>
<dbReference type="PDB" id="4D2T">
    <property type="method" value="X-ray"/>
    <property type="resolution" value="2.70 A"/>
    <property type="chains" value="A/B/C/D=1-336"/>
</dbReference>
<dbReference type="PDB" id="4D2V">
    <property type="method" value="X-ray"/>
    <property type="resolution" value="2.45 A"/>
    <property type="chains" value="A/B/C/D=1-336"/>
</dbReference>
<dbReference type="PDB" id="4D2W">
    <property type="method" value="X-ray"/>
    <property type="resolution" value="1.92 A"/>
    <property type="chains" value="A/B/C/D=1-336"/>
</dbReference>
<dbReference type="PDB" id="4IXP">
    <property type="method" value="X-ray"/>
    <property type="resolution" value="2.75 A"/>
    <property type="chains" value="A=1-340"/>
</dbReference>
<dbReference type="PDB" id="4UMP">
    <property type="method" value="X-ray"/>
    <property type="resolution" value="2.30 A"/>
    <property type="chains" value="A/B/C/D=1-336"/>
</dbReference>
<dbReference type="PDB" id="4UMQ">
    <property type="method" value="X-ray"/>
    <property type="resolution" value="2.60 A"/>
    <property type="chains" value="A=1-336"/>
</dbReference>
<dbReference type="PDB" id="4UMR">
    <property type="method" value="X-ray"/>
    <property type="resolution" value="3.00 A"/>
    <property type="chains" value="A=1-336"/>
</dbReference>
<dbReference type="PDB" id="4UMT">
    <property type="method" value="X-ray"/>
    <property type="resolution" value="1.98 A"/>
    <property type="chains" value="A=1-336"/>
</dbReference>
<dbReference type="PDB" id="4UMU">
    <property type="method" value="X-ray"/>
    <property type="resolution" value="2.02 A"/>
    <property type="chains" value="A=1-336"/>
</dbReference>
<dbReference type="PDB" id="5IH8">
    <property type="method" value="X-ray"/>
    <property type="resolution" value="1.85 A"/>
    <property type="chains" value="A=3-330"/>
</dbReference>
<dbReference type="PDB" id="5IH9">
    <property type="method" value="X-ray"/>
    <property type="resolution" value="1.79 A"/>
    <property type="chains" value="A=3-330"/>
</dbReference>
<dbReference type="PDB" id="5IHA">
    <property type="method" value="X-ray"/>
    <property type="resolution" value="1.96 A"/>
    <property type="chains" value="A=3-330"/>
</dbReference>
<dbReference type="PDB" id="5IHC">
    <property type="method" value="X-ray"/>
    <property type="resolution" value="2.14 A"/>
    <property type="chains" value="A=3-330"/>
</dbReference>
<dbReference type="PDB" id="5K00">
    <property type="method" value="X-ray"/>
    <property type="resolution" value="1.77 A"/>
    <property type="chains" value="A=3-330"/>
</dbReference>
<dbReference type="PDB" id="5M5A">
    <property type="method" value="X-ray"/>
    <property type="resolution" value="1.90 A"/>
    <property type="chains" value="A=2-340"/>
</dbReference>
<dbReference type="PDB" id="5MAF">
    <property type="method" value="X-ray"/>
    <property type="resolution" value="2.80 A"/>
    <property type="chains" value="A=2-340"/>
</dbReference>
<dbReference type="PDB" id="5MAG">
    <property type="method" value="X-ray"/>
    <property type="resolution" value="2.35 A"/>
    <property type="chains" value="A=2-340"/>
</dbReference>
<dbReference type="PDB" id="5MAH">
    <property type="method" value="X-ray"/>
    <property type="resolution" value="2.00 A"/>
    <property type="chains" value="A=2-340"/>
</dbReference>
<dbReference type="PDB" id="5MAI">
    <property type="method" value="X-ray"/>
    <property type="resolution" value="2.15 A"/>
    <property type="chains" value="A=2-340"/>
</dbReference>
<dbReference type="PDB" id="5TVT">
    <property type="method" value="X-ray"/>
    <property type="resolution" value="2.28 A"/>
    <property type="chains" value="A=2-333"/>
</dbReference>
<dbReference type="PDB" id="5TWL">
    <property type="method" value="X-ray"/>
    <property type="resolution" value="2.42 A"/>
    <property type="chains" value="A=2-340"/>
</dbReference>
<dbReference type="PDB" id="5TWU">
    <property type="method" value="X-ray"/>
    <property type="resolution" value="2.60 A"/>
    <property type="chains" value="A/B=1-340"/>
</dbReference>
<dbReference type="PDB" id="5TWY">
    <property type="method" value="X-ray"/>
    <property type="resolution" value="2.91 A"/>
    <property type="chains" value="A/B=2-340"/>
</dbReference>
<dbReference type="PDB" id="5TWZ">
    <property type="method" value="X-ray"/>
    <property type="resolution" value="2.63 A"/>
    <property type="chains" value="A=2-340"/>
</dbReference>
<dbReference type="PDB" id="5TX3">
    <property type="method" value="X-ray"/>
    <property type="resolution" value="2.90 A"/>
    <property type="chains" value="A/B=1-340"/>
</dbReference>
<dbReference type="PDB" id="6GVX">
    <property type="method" value="X-ray"/>
    <property type="resolution" value="2.24 A"/>
    <property type="chains" value="A/B=1-340"/>
</dbReference>
<dbReference type="PDB" id="6VXR">
    <property type="method" value="X-ray"/>
    <property type="resolution" value="2.10 A"/>
    <property type="chains" value="A=1-338"/>
</dbReference>
<dbReference type="PDB" id="9F31">
    <property type="method" value="X-ray"/>
    <property type="resolution" value="2.00 A"/>
    <property type="chains" value="A=1-348"/>
</dbReference>
<dbReference type="PDBsum" id="4BKY"/>
<dbReference type="PDBsum" id="4BKZ"/>
<dbReference type="PDBsum" id="4BL1"/>
<dbReference type="PDBsum" id="4D2P"/>
<dbReference type="PDBsum" id="4D2T"/>
<dbReference type="PDBsum" id="4D2V"/>
<dbReference type="PDBsum" id="4D2W"/>
<dbReference type="PDBsum" id="4IXP"/>
<dbReference type="PDBsum" id="4UMP"/>
<dbReference type="PDBsum" id="4UMQ"/>
<dbReference type="PDBsum" id="4UMR"/>
<dbReference type="PDBsum" id="4UMT"/>
<dbReference type="PDBsum" id="4UMU"/>
<dbReference type="PDBsum" id="5IH8"/>
<dbReference type="PDBsum" id="5IH9"/>
<dbReference type="PDBsum" id="5IHA"/>
<dbReference type="PDBsum" id="5IHC"/>
<dbReference type="PDBsum" id="5K00"/>
<dbReference type="PDBsum" id="5M5A"/>
<dbReference type="PDBsum" id="5MAF"/>
<dbReference type="PDBsum" id="5MAG"/>
<dbReference type="PDBsum" id="5MAH"/>
<dbReference type="PDBsum" id="5MAI"/>
<dbReference type="PDBsum" id="5TVT"/>
<dbReference type="PDBsum" id="5TWL"/>
<dbReference type="PDBsum" id="5TWU"/>
<dbReference type="PDBsum" id="5TWY"/>
<dbReference type="PDBsum" id="5TWZ"/>
<dbReference type="PDBsum" id="5TX3"/>
<dbReference type="PDBsum" id="6GVX"/>
<dbReference type="PDBsum" id="6VXR"/>
<dbReference type="PDBsum" id="9F31"/>
<dbReference type="SMR" id="Q14680"/>
<dbReference type="BioGRID" id="115171">
    <property type="interactions" value="118"/>
</dbReference>
<dbReference type="FunCoup" id="Q14680">
    <property type="interactions" value="1515"/>
</dbReference>
<dbReference type="IntAct" id="Q14680">
    <property type="interactions" value="58"/>
</dbReference>
<dbReference type="MINT" id="Q14680"/>
<dbReference type="STRING" id="9606.ENSP00000298048"/>
<dbReference type="BindingDB" id="Q14680"/>
<dbReference type="ChEMBL" id="CHEMBL4578"/>
<dbReference type="DrugBank" id="DB12010">
    <property type="generic name" value="Fostamatinib"/>
</dbReference>
<dbReference type="DrugCentral" id="Q14680"/>
<dbReference type="GuidetoPHARMACOLOGY" id="2102"/>
<dbReference type="GlyGen" id="Q14680">
    <property type="glycosylation" value="3 sites, 1 N-linked glycan (2 sites), 1 O-linked glycan (1 site)"/>
</dbReference>
<dbReference type="iPTMnet" id="Q14680"/>
<dbReference type="PhosphoSitePlus" id="Q14680"/>
<dbReference type="BioMuta" id="MELK"/>
<dbReference type="DMDM" id="50400857"/>
<dbReference type="CPTAC" id="CPTAC-1169"/>
<dbReference type="CPTAC" id="CPTAC-2888"/>
<dbReference type="jPOST" id="Q14680"/>
<dbReference type="MassIVE" id="Q14680"/>
<dbReference type="PaxDb" id="9606-ENSP00000298048"/>
<dbReference type="PeptideAtlas" id="Q14680"/>
<dbReference type="ProteomicsDB" id="1664"/>
<dbReference type="ProteomicsDB" id="1665"/>
<dbReference type="ProteomicsDB" id="25479"/>
<dbReference type="ProteomicsDB" id="26046"/>
<dbReference type="ProteomicsDB" id="27114"/>
<dbReference type="ProteomicsDB" id="60115">
    <molecule id="Q14680-1"/>
</dbReference>
<dbReference type="ProteomicsDB" id="6817"/>
<dbReference type="ProteomicsDB" id="6894"/>
<dbReference type="Pumba" id="Q14680"/>
<dbReference type="Antibodypedia" id="2095">
    <property type="antibodies" value="460 antibodies from 39 providers"/>
</dbReference>
<dbReference type="DNASU" id="9833"/>
<dbReference type="Ensembl" id="ENST00000298048.7">
    <molecule id="Q14680-1"/>
    <property type="protein sequence ID" value="ENSP00000298048.2"/>
    <property type="gene ID" value="ENSG00000165304.8"/>
</dbReference>
<dbReference type="Ensembl" id="ENST00000536329.5">
    <molecule id="Q14680-5"/>
    <property type="protein sequence ID" value="ENSP00000443550.1"/>
    <property type="gene ID" value="ENSG00000165304.8"/>
</dbReference>
<dbReference type="Ensembl" id="ENST00000536860.5">
    <molecule id="Q14680-8"/>
    <property type="protein sequence ID" value="ENSP00000439792.1"/>
    <property type="gene ID" value="ENSG00000165304.8"/>
</dbReference>
<dbReference type="Ensembl" id="ENST00000536987.5">
    <molecule id="Q14680-4"/>
    <property type="protein sequence ID" value="ENSP00000439184.1"/>
    <property type="gene ID" value="ENSG00000165304.8"/>
</dbReference>
<dbReference type="Ensembl" id="ENST00000541717.4">
    <molecule id="Q14680-7"/>
    <property type="protein sequence ID" value="ENSP00000437804.1"/>
    <property type="gene ID" value="ENSG00000165304.8"/>
</dbReference>
<dbReference type="Ensembl" id="ENST00000543751.5">
    <molecule id="Q14680-6"/>
    <property type="protein sequence ID" value="ENSP00000441596.1"/>
    <property type="gene ID" value="ENSG00000165304.8"/>
</dbReference>
<dbReference type="Ensembl" id="ENST00000545008.5">
    <molecule id="Q14680-2"/>
    <property type="protein sequence ID" value="ENSP00000445452.1"/>
    <property type="gene ID" value="ENSG00000165304.8"/>
</dbReference>
<dbReference type="GeneID" id="9833"/>
<dbReference type="KEGG" id="hsa:9833"/>
<dbReference type="MANE-Select" id="ENST00000298048.7">
    <property type="protein sequence ID" value="ENSP00000298048.2"/>
    <property type="RefSeq nucleotide sequence ID" value="NM_014791.4"/>
    <property type="RefSeq protein sequence ID" value="NP_055606.1"/>
</dbReference>
<dbReference type="UCSC" id="uc003zzn.5">
    <molecule id="Q14680-1"/>
    <property type="organism name" value="human"/>
</dbReference>
<dbReference type="AGR" id="HGNC:16870"/>
<dbReference type="CTD" id="9833"/>
<dbReference type="DisGeNET" id="9833"/>
<dbReference type="GeneCards" id="MELK"/>
<dbReference type="HGNC" id="HGNC:16870">
    <property type="gene designation" value="MELK"/>
</dbReference>
<dbReference type="HPA" id="ENSG00000165304">
    <property type="expression patterns" value="Tissue enhanced (bone marrow, lymphoid tissue)"/>
</dbReference>
<dbReference type="MIM" id="607025">
    <property type="type" value="gene"/>
</dbReference>
<dbReference type="neXtProt" id="NX_Q14680"/>
<dbReference type="OpenTargets" id="ENSG00000165304"/>
<dbReference type="PharmGKB" id="PA134902874"/>
<dbReference type="VEuPathDB" id="HostDB:ENSG00000165304"/>
<dbReference type="eggNOG" id="KOG0583">
    <property type="taxonomic scope" value="Eukaryota"/>
</dbReference>
<dbReference type="GeneTree" id="ENSGT00940000154889"/>
<dbReference type="HOGENOM" id="CLU_000288_157_8_1"/>
<dbReference type="InParanoid" id="Q14680"/>
<dbReference type="OMA" id="NVCTPKS"/>
<dbReference type="OrthoDB" id="193931at2759"/>
<dbReference type="PAN-GO" id="Q14680">
    <property type="GO annotations" value="4 GO annotations based on evolutionary models"/>
</dbReference>
<dbReference type="PhylomeDB" id="Q14680"/>
<dbReference type="TreeFam" id="TF314032"/>
<dbReference type="PathwayCommons" id="Q14680"/>
<dbReference type="SignaLink" id="Q14680"/>
<dbReference type="SIGNOR" id="Q14680"/>
<dbReference type="BioGRID-ORCS" id="9833">
    <property type="hits" value="11 hits in 1194 CRISPR screens"/>
</dbReference>
<dbReference type="ChiTaRS" id="MELK">
    <property type="organism name" value="human"/>
</dbReference>
<dbReference type="EvolutionaryTrace" id="Q14680"/>
<dbReference type="GeneWiki" id="MELK"/>
<dbReference type="GenomeRNAi" id="9833"/>
<dbReference type="Pharos" id="Q14680">
    <property type="development level" value="Tchem"/>
</dbReference>
<dbReference type="PRO" id="PR:Q14680"/>
<dbReference type="Proteomes" id="UP000005640">
    <property type="component" value="Chromosome 9"/>
</dbReference>
<dbReference type="RNAct" id="Q14680">
    <property type="molecule type" value="protein"/>
</dbReference>
<dbReference type="Bgee" id="ENSG00000165304">
    <property type="expression patterns" value="Expressed in secondary oocyte and 146 other cell types or tissues"/>
</dbReference>
<dbReference type="ExpressionAtlas" id="Q14680">
    <property type="expression patterns" value="baseline and differential"/>
</dbReference>
<dbReference type="GO" id="GO:0005938">
    <property type="term" value="C:cell cortex"/>
    <property type="evidence" value="ECO:0000314"/>
    <property type="project" value="UniProtKB"/>
</dbReference>
<dbReference type="GO" id="GO:0016020">
    <property type="term" value="C:membrane"/>
    <property type="evidence" value="ECO:0007005"/>
    <property type="project" value="UniProtKB"/>
</dbReference>
<dbReference type="GO" id="GO:0005886">
    <property type="term" value="C:plasma membrane"/>
    <property type="evidence" value="ECO:0000314"/>
    <property type="project" value="UniProtKB"/>
</dbReference>
<dbReference type="GO" id="GO:0005524">
    <property type="term" value="F:ATP binding"/>
    <property type="evidence" value="ECO:0007669"/>
    <property type="project" value="UniProtKB-KW"/>
</dbReference>
<dbReference type="GO" id="GO:0005509">
    <property type="term" value="F:calcium ion binding"/>
    <property type="evidence" value="ECO:0000314"/>
    <property type="project" value="UniProtKB"/>
</dbReference>
<dbReference type="GO" id="GO:0008289">
    <property type="term" value="F:lipid binding"/>
    <property type="evidence" value="ECO:0007669"/>
    <property type="project" value="UniProtKB-KW"/>
</dbReference>
<dbReference type="GO" id="GO:0004715">
    <property type="term" value="F:non-membrane spanning protein tyrosine kinase activity"/>
    <property type="evidence" value="ECO:0000314"/>
    <property type="project" value="UniProtKB"/>
</dbReference>
<dbReference type="GO" id="GO:0106310">
    <property type="term" value="F:protein serine kinase activity"/>
    <property type="evidence" value="ECO:0007669"/>
    <property type="project" value="RHEA"/>
</dbReference>
<dbReference type="GO" id="GO:0004674">
    <property type="term" value="F:protein serine/threonine kinase activity"/>
    <property type="evidence" value="ECO:0000314"/>
    <property type="project" value="UniProtKB"/>
</dbReference>
<dbReference type="GO" id="GO:0006915">
    <property type="term" value="P:apoptotic process"/>
    <property type="evidence" value="ECO:0000314"/>
    <property type="project" value="UniProtKB"/>
</dbReference>
<dbReference type="GO" id="GO:0008283">
    <property type="term" value="P:cell population proliferation"/>
    <property type="evidence" value="ECO:0000314"/>
    <property type="project" value="UniProtKB"/>
</dbReference>
<dbReference type="GO" id="GO:0000086">
    <property type="term" value="P:G2/M transition of mitotic cell cycle"/>
    <property type="evidence" value="ECO:0000304"/>
    <property type="project" value="UniProtKB"/>
</dbReference>
<dbReference type="GO" id="GO:0030097">
    <property type="term" value="P:hemopoiesis"/>
    <property type="evidence" value="ECO:0000250"/>
    <property type="project" value="UniProtKB"/>
</dbReference>
<dbReference type="GO" id="GO:0008631">
    <property type="term" value="P:intrinsic apoptotic signaling pathway in response to oxidative stress"/>
    <property type="evidence" value="ECO:0007669"/>
    <property type="project" value="Ensembl"/>
</dbReference>
<dbReference type="GO" id="GO:0061351">
    <property type="term" value="P:neural precursor cell proliferation"/>
    <property type="evidence" value="ECO:0000250"/>
    <property type="project" value="UniProtKB"/>
</dbReference>
<dbReference type="GO" id="GO:0043065">
    <property type="term" value="P:positive regulation of apoptotic process"/>
    <property type="evidence" value="ECO:0000250"/>
    <property type="project" value="UniProtKB"/>
</dbReference>
<dbReference type="GO" id="GO:0046777">
    <property type="term" value="P:protein autophosphorylation"/>
    <property type="evidence" value="ECO:0000314"/>
    <property type="project" value="UniProtKB"/>
</dbReference>
<dbReference type="CDD" id="cd12198">
    <property type="entry name" value="MELK_C"/>
    <property type="match status" value="1"/>
</dbReference>
<dbReference type="CDD" id="cd14078">
    <property type="entry name" value="STKc_MELK"/>
    <property type="match status" value="1"/>
</dbReference>
<dbReference type="CDD" id="cd14341">
    <property type="entry name" value="UBA_MELK"/>
    <property type="match status" value="1"/>
</dbReference>
<dbReference type="FunFam" id="1.10.510.10:FF:000571">
    <property type="entry name" value="Maternal embryonic leucine zipper kinase"/>
    <property type="match status" value="1"/>
</dbReference>
<dbReference type="FunFam" id="3.30.200.20:FF:000003">
    <property type="entry name" value="Non-specific serine/threonine protein kinase"/>
    <property type="match status" value="1"/>
</dbReference>
<dbReference type="FunFam" id="3.30.310.80:FF:000004">
    <property type="entry name" value="Non-specific serine/threonine protein kinase"/>
    <property type="match status" value="1"/>
</dbReference>
<dbReference type="Gene3D" id="3.30.310.80">
    <property type="entry name" value="Kinase associated domain 1, KA1"/>
    <property type="match status" value="1"/>
</dbReference>
<dbReference type="Gene3D" id="1.10.510.10">
    <property type="entry name" value="Transferase(Phosphotransferase) domain 1"/>
    <property type="match status" value="1"/>
</dbReference>
<dbReference type="InterPro" id="IPR028375">
    <property type="entry name" value="KA1/Ssp2_C"/>
</dbReference>
<dbReference type="InterPro" id="IPR001772">
    <property type="entry name" value="KA1_dom"/>
</dbReference>
<dbReference type="InterPro" id="IPR011009">
    <property type="entry name" value="Kinase-like_dom_sf"/>
</dbReference>
<dbReference type="InterPro" id="IPR034673">
    <property type="entry name" value="MELK"/>
</dbReference>
<dbReference type="InterPro" id="IPR048637">
    <property type="entry name" value="MELK_UBA"/>
</dbReference>
<dbReference type="InterPro" id="IPR000719">
    <property type="entry name" value="Prot_kinase_dom"/>
</dbReference>
<dbReference type="InterPro" id="IPR017441">
    <property type="entry name" value="Protein_kinase_ATP_BS"/>
</dbReference>
<dbReference type="InterPro" id="IPR008271">
    <property type="entry name" value="Ser/Thr_kinase_AS"/>
</dbReference>
<dbReference type="PANTHER" id="PTHR24346">
    <property type="entry name" value="MAP/MICROTUBULE AFFINITY-REGULATING KINASE"/>
    <property type="match status" value="1"/>
</dbReference>
<dbReference type="PANTHER" id="PTHR24346:SF30">
    <property type="entry name" value="MATERNAL EMBRYONIC LEUCINE ZIPPER KINASE"/>
    <property type="match status" value="1"/>
</dbReference>
<dbReference type="Pfam" id="PF02149">
    <property type="entry name" value="KA1"/>
    <property type="match status" value="1"/>
</dbReference>
<dbReference type="Pfam" id="PF00069">
    <property type="entry name" value="Pkinase"/>
    <property type="match status" value="1"/>
</dbReference>
<dbReference type="Pfam" id="PF21594">
    <property type="entry name" value="UBA_MELK"/>
    <property type="match status" value="1"/>
</dbReference>
<dbReference type="SMART" id="SM00220">
    <property type="entry name" value="S_TKc"/>
    <property type="match status" value="1"/>
</dbReference>
<dbReference type="SUPFAM" id="SSF103243">
    <property type="entry name" value="KA1-like"/>
    <property type="match status" value="1"/>
</dbReference>
<dbReference type="SUPFAM" id="SSF56112">
    <property type="entry name" value="Protein kinase-like (PK-like)"/>
    <property type="match status" value="1"/>
</dbReference>
<dbReference type="PROSITE" id="PS50032">
    <property type="entry name" value="KA1"/>
    <property type="match status" value="1"/>
</dbReference>
<dbReference type="PROSITE" id="PS00107">
    <property type="entry name" value="PROTEIN_KINASE_ATP"/>
    <property type="match status" value="1"/>
</dbReference>
<dbReference type="PROSITE" id="PS50011">
    <property type="entry name" value="PROTEIN_KINASE_DOM"/>
    <property type="match status" value="1"/>
</dbReference>
<dbReference type="PROSITE" id="PS00108">
    <property type="entry name" value="PROTEIN_KINASE_ST"/>
    <property type="match status" value="1"/>
</dbReference>
<name>MELK_HUMAN</name>
<comment type="function">
    <text evidence="5 6 7 9 11 13">Serine/threonine-protein kinase involved in various processes such as cell cycle regulation, self-renewal of stem cells, apoptosis and splicing regulation. Has a broad substrate specificity; phosphorylates BCL2L14, CDC25B, MAP3K5/ASK1 and ZNF622. Acts as an activator of apoptosis by phosphorylating and activating MAP3K5/ASK1. Acts as a regulator of cell cycle, notably by mediating phosphorylation of CDC25B, promoting localization of CDC25B to the centrosome and the spindle poles during mitosis. Plays a key role in cell proliferation and carcinogenesis. Required for proliferation of embryonic and postnatal multipotent neural progenitors. Phosphorylates and inhibits BCL2L14, possibly leading to affect mammary carcinogenesis by mediating inhibition of the pro-apoptotic function of BCL2L14. Also involved in the inhibition of spliceosome assembly during mitosis by phosphorylating ZNF622, thereby contributing to its redirection to the nucleus. May also play a role in primitive hematopoiesis.</text>
</comment>
<comment type="catalytic activity">
    <reaction evidence="4 11">
        <text>L-tyrosyl-[protein] + ATP = O-phospho-L-tyrosyl-[protein] + ADP + H(+)</text>
        <dbReference type="Rhea" id="RHEA:10596"/>
        <dbReference type="Rhea" id="RHEA-COMP:10136"/>
        <dbReference type="Rhea" id="RHEA-COMP:20101"/>
        <dbReference type="ChEBI" id="CHEBI:15378"/>
        <dbReference type="ChEBI" id="CHEBI:30616"/>
        <dbReference type="ChEBI" id="CHEBI:46858"/>
        <dbReference type="ChEBI" id="CHEBI:61978"/>
        <dbReference type="ChEBI" id="CHEBI:456216"/>
        <dbReference type="EC" id="2.7.10.2"/>
    </reaction>
</comment>
<comment type="catalytic activity">
    <reaction evidence="11">
        <text>L-seryl-[protein] + ATP = O-phospho-L-seryl-[protein] + ADP + H(+)</text>
        <dbReference type="Rhea" id="RHEA:17989"/>
        <dbReference type="Rhea" id="RHEA-COMP:9863"/>
        <dbReference type="Rhea" id="RHEA-COMP:11604"/>
        <dbReference type="ChEBI" id="CHEBI:15378"/>
        <dbReference type="ChEBI" id="CHEBI:29999"/>
        <dbReference type="ChEBI" id="CHEBI:30616"/>
        <dbReference type="ChEBI" id="CHEBI:83421"/>
        <dbReference type="ChEBI" id="CHEBI:456216"/>
        <dbReference type="EC" id="2.7.11.1"/>
    </reaction>
</comment>
<comment type="catalytic activity">
    <reaction evidence="11">
        <text>L-threonyl-[protein] + ATP = O-phospho-L-threonyl-[protein] + ADP + H(+)</text>
        <dbReference type="Rhea" id="RHEA:46608"/>
        <dbReference type="Rhea" id="RHEA-COMP:11060"/>
        <dbReference type="Rhea" id="RHEA-COMP:11605"/>
        <dbReference type="ChEBI" id="CHEBI:15378"/>
        <dbReference type="ChEBI" id="CHEBI:30013"/>
        <dbReference type="ChEBI" id="CHEBI:30616"/>
        <dbReference type="ChEBI" id="CHEBI:61977"/>
        <dbReference type="ChEBI" id="CHEBI:456216"/>
        <dbReference type="EC" id="2.7.11.1"/>
    </reaction>
</comment>
<comment type="activity regulation">
    <text evidence="11">Activated by autophosphorylation of the T-loop at Thr-167 and Ser-171: in contrast to other members of the SNF1 subfamily, phosphorylation at Thr-167 is not mediated by STK11/LKB1 but via autophosphorylation instead. Inhibited by calcium-binding. Kinase activity is also regulated by reducing agents: dithiothreitol (DTT) or reduced glutathione are required for kinase activity in vitro; such dependence is however not due to the presence of disulfide bonds.</text>
</comment>
<comment type="subunit">
    <text evidence="5 7">Monomer. Interacts with ZNF622 and PPP1R8.</text>
</comment>
<comment type="interaction">
    <interactant intactId="EBI-1046702">
        <id>Q14680</id>
    </interactant>
    <interactant intactId="EBI-1385773">
        <id>Q9BZR8</id>
        <label>BCL2L14</label>
    </interactant>
    <organismsDiffer>false</organismsDiffer>
    <experiments>4</experiments>
</comment>
<comment type="subcellular location">
    <subcellularLocation>
        <location evidence="10 16">Cell membrane</location>
        <topology evidence="10 16">Peripheral membrane protein</topology>
    </subcellularLocation>
</comment>
<comment type="alternative products">
    <event type="alternative splicing"/>
    <isoform>
        <id>Q14680-1</id>
        <name>1</name>
        <sequence type="displayed"/>
    </isoform>
    <isoform>
        <id>Q14680-2</id>
        <name>2</name>
        <sequence type="described" ref="VSP_044715"/>
    </isoform>
    <isoform>
        <id>Q14680-3</id>
        <name>3</name>
        <sequence type="described" ref="VSP_045208"/>
    </isoform>
    <isoform>
        <id>Q14680-4</id>
        <name>4</name>
        <sequence type="described" ref="VSP_045209"/>
    </isoform>
    <isoform>
        <id>Q14680-5</id>
        <name>5</name>
        <sequence type="described" ref="VSP_045430"/>
    </isoform>
    <isoform>
        <id>Q14680-6</id>
        <name>6</name>
        <sequence type="described" ref="VSP_045431"/>
    </isoform>
    <isoform>
        <id>Q14680-7</id>
        <name>7</name>
        <sequence type="described" ref="VSP_046760"/>
    </isoform>
    <isoform>
        <id>Q14680-8</id>
        <name>8</name>
        <sequence type="described" ref="VSP_046759"/>
    </isoform>
</comment>
<comment type="tissue specificity">
    <text evidence="19">Expressed in placenta, kidney, thymus, testis, ovary and intestine.</text>
</comment>
<comment type="developmental stage">
    <text evidence="15">Increases during G2/M phase compared to interphase. Protein level decreases when cells exit mitosis, probably due to degradation.</text>
</comment>
<comment type="induction">
    <text evidence="17 18">Up-regulated in many cancers cells. Up-regulated upon treatment with radiation or 5-fluorouracil (5-FU) in colorectal cancer cells, suggesting that it might be associated with increased resistance of colorectal cells against radiation and 5-FU. Down-regulated upon siomycin A, a thiazole antibiotic, treatment, leading to inhibit tumor growth in vivo.</text>
</comment>
<comment type="domain">
    <text evidence="1">The KA1 domain mediates binding to phospholipids and targeting to membranes.</text>
</comment>
<comment type="PTM">
    <text evidence="23 24 25 26 28">Autophosphorylated: autophosphorylation of the T-loop at Thr-167 and Ser-171 is required for activation. Thr-478 phosphorylation during mitosis promotes interaction with PPP1R8 (Probable).</text>
</comment>
<comment type="disease">
    <text>Defects in MELK are associated with some cancers, such as brain or breast cancers. Expression is dramatically increased in aggressive undifferentiated tumors, correlating with poor patient outcome in breast and brain cancers, suggesting a role in tumor-initiating cells and proliferation via its function in cell proliferation regulation.</text>
</comment>
<comment type="miscellaneous">
    <text evidence="27 29">Potential therapeutic target for treatment of somatic tumors, such as brain and breast cancers, down-regulation of MELK inhibiting tumorigenesis (PubMed:17960622, PubMed:20861186).</text>
</comment>
<comment type="similarity">
    <text evidence="22">Belongs to the protein kinase superfamily. CAMK Ser/Thr protein kinase family. SNF1 subfamily.</text>
</comment>
<comment type="sequence caution" evidence="22">
    <conflict type="erroneous initiation">
        <sequence resource="EMBL-CDS" id="BAA11492"/>
    </conflict>
    <text>Extended N-terminus.</text>
</comment>
<comment type="online information" name="Atlas of Genetics and Cytogenetics in Oncology and Haematology">
    <link uri="https://atlasgeneticsoncology.org/gene/43360/MELK"/>
</comment>
<accession>Q14680</accession>
<accession>A6P3A7</accession>
<accession>A6P3A8</accession>
<accession>B1AMQ6</accession>
<accession>B7Z1E6</accession>
<accession>B7Z5M5</accession>
<accession>B7Z6Q7</accession>
<accession>B7Z6R8</accession>
<accession>B7Z6Y0</accession>
<accession>B7Z7Q1</accession>
<accession>D3DRP8</accession>
<accession>F5H0Y0</accession>
<accession>F5H2R4</accession>
<accession>F5H689</accession>
<accession>Q7L3C3</accession>
<gene>
    <name type="primary">MELK</name>
    <name type="synonym">KIAA0175</name>
</gene>
<sequence length="651" mass="74642">MKDYDELLKYYELHETIGTGGFAKVKLACHILTGEMVAIKIMDKNTLGSDLPRIKTEIEALKNLRHQHICQLYHVLETANKIFMVLEYCPGGELFDYIISQDRLSEEETRVVFRQIVSAVAYVHSQGYAHRDLKPENLLFDEYHKLKLIDFGLCAKPKGNKDYHLQTCCGSLAYAAPELIQGKSYLGSEADVWSMGILLYVLMCGFLPFDDDNVMALYKKIMRGKYDVPKWLSPSSILLLQQMLQVDPKKRISMKNLLNHPWIMQDYNYPVEWQSKNPFIHLDDDCVTELSVHHRNNRQTMEDLISLWQYDHLTATYLLLLAKKARGKPVRLRLSSFSCGQASATPFTDIKSNNWSLEDVTASDKNYVAGLIDYDWCEDDLSTGAATPRTSQFTKYWTESNGVESKSLTPALCRTPANKLKNKENVYTPKSAVKNEEYFMFPEPKTPVNKNQHKREILTTPNRYTTPSKARNQCLKETPIKIPVNSTGTDKLMTGVISPERRCRSVELDLNQAHMEETPKRKGAKVFGSLERGLDKVITVLTRSKRKGSARDGPRRLKLHYNVTTTRLVNPDQLLNEIMSILPKKHVDFVQKGYTLKCQTQSDFGKVTMQFELEVCQLQKPDVVGIRRQRLKGDAWVYKRLVEDILSSCKV</sequence>
<feature type="chain" id="PRO_0000086323" description="Maternal embryonic leucine zipper kinase">
    <location>
        <begin position="1"/>
        <end position="651"/>
    </location>
</feature>
<feature type="domain" description="Protein kinase" evidence="2">
    <location>
        <begin position="11"/>
        <end position="263"/>
    </location>
</feature>
<feature type="domain" description="KA1" evidence="3">
    <location>
        <begin position="602"/>
        <end position="651"/>
    </location>
</feature>
<feature type="region of interest" description="UBA-like">
    <location>
        <begin position="282"/>
        <end position="321"/>
    </location>
</feature>
<feature type="region of interest" description="Autoinhibitory region">
    <location>
        <begin position="326"/>
        <end position="651"/>
    </location>
</feature>
<feature type="active site" description="Proton acceptor" evidence="2 4">
    <location>
        <position position="132"/>
    </location>
</feature>
<feature type="binding site" evidence="2">
    <location>
        <begin position="17"/>
        <end position="25"/>
    </location>
    <ligand>
        <name>ATP</name>
        <dbReference type="ChEBI" id="CHEBI:30616"/>
    </ligand>
</feature>
<feature type="binding site" evidence="2">
    <location>
        <position position="40"/>
    </location>
    <ligand>
        <name>ATP</name>
        <dbReference type="ChEBI" id="CHEBI:30616"/>
    </ligand>
</feature>
<feature type="modified residue" description="Phosphothreonine; by autocatalysis" evidence="11">
    <location>
        <position position="56"/>
    </location>
</feature>
<feature type="modified residue" description="Phosphotyrosine; by autocatalysis" evidence="11">
    <location>
        <position position="163"/>
    </location>
</feature>
<feature type="modified residue" description="Phosphothreonine; by autocatalysis" evidence="8 11 12">
    <location>
        <position position="167"/>
    </location>
</feature>
<feature type="modified residue" description="Phosphoserine; by autocatalysis" evidence="11">
    <location>
        <position position="171"/>
    </location>
</feature>
<feature type="modified residue" description="Phosphoserine; by autocatalysis" evidence="11">
    <location>
        <position position="253"/>
    </location>
</feature>
<feature type="modified residue" description="Phosphoserine; by autocatalysis" evidence="11">
    <location>
        <position position="336"/>
    </location>
</feature>
<feature type="modified residue" description="Phosphoserine; by autocatalysis" evidence="11 12">
    <location>
        <position position="343"/>
    </location>
</feature>
<feature type="modified residue" description="Phosphoserine; by autocatalysis" evidence="11 12 32 33 34 35">
    <location>
        <position position="356"/>
    </location>
</feature>
<feature type="modified residue" description="Phosphotyrosine" evidence="12">
    <location>
        <position position="367"/>
    </location>
</feature>
<feature type="modified residue" description="Phosphoserine; by autocatalysis" evidence="11">
    <location>
        <position position="391"/>
    </location>
</feature>
<feature type="modified residue" description="Phosphothreonine; by autocatalysis" evidence="11 12">
    <location>
        <position position="398"/>
    </location>
</feature>
<feature type="modified residue" description="Phosphoserine; by autocatalysis" evidence="11">
    <location>
        <position position="407"/>
    </location>
</feature>
<feature type="modified residue" description="Phosphothreonine" evidence="12">
    <location>
        <position position="409"/>
    </location>
</feature>
<feature type="modified residue" description="Phosphoserine; by autocatalysis" evidence="11 12 31">
    <location>
        <position position="431"/>
    </location>
</feature>
<feature type="modified residue" description="Phosphothreonine" evidence="7">
    <location>
        <position position="478"/>
    </location>
</feature>
<feature type="modified residue" description="Phosphothreonine; by autocatalysis" evidence="11 12">
    <location>
        <position position="494"/>
    </location>
</feature>
<feature type="modified residue" description="Phosphoserine" evidence="32 33 35">
    <location>
        <position position="498"/>
    </location>
</feature>
<feature type="modified residue" description="Phosphoserine; by autocatalysis" evidence="11 12 30 31 32 33 35">
    <location>
        <position position="505"/>
    </location>
</feature>
<feature type="modified residue" description="Phosphothreonine" evidence="32">
    <location>
        <position position="518"/>
    </location>
</feature>
<feature type="modified residue" description="Phosphoserine" evidence="11 12 32 33 35">
    <location>
        <position position="529"/>
    </location>
</feature>
<feature type="modified residue" description="Phosphoserine; by autocatalysis" evidence="11 12 32 33 35">
    <location>
        <position position="529"/>
    </location>
</feature>
<feature type="modified residue" description="Phosphothreonine; by autocatalysis" evidence="11">
    <location>
        <position position="539"/>
    </location>
</feature>
<feature type="splice variant" id="VSP_045208" description="In isoform 3." evidence="20">
    <location>
        <begin position="1"/>
        <end position="194"/>
    </location>
</feature>
<feature type="splice variant" id="VSP_045209" description="In isoform 4." evidence="20">
    <original>MKDYDELLKYYELHETIGTGGFAKVKLACHILTGEMVAIKIMDKNTLGSDLPRIKTEIEALKNLRHQHICQLYHVLETANKIFMVLEYCPGGELFDYIISQDRLSEEETRVVFRQIVSAVAYVHSQGYAHRDLKP</original>
    <variation>MVLE</variation>
    <location>
        <begin position="1"/>
        <end position="135"/>
    </location>
</feature>
<feature type="splice variant" id="VSP_045430" description="In isoform 5." evidence="20 21">
    <original>MKDYDELLKYYELHETIGTGGFAKVKLACHILTGEMVAIKIMDKNTLGSDLPRIKTEIEALKNLRHQHICQLYHVLETANKIFMVLE</original>
    <variation>MMNFSNIMNYMKLLGQ</variation>
    <location>
        <begin position="1"/>
        <end position="87"/>
    </location>
</feature>
<feature type="splice variant" id="VSP_045431" description="In isoform 6." evidence="21">
    <original>MKDYDELLKYYELHETIGTGGFAKVKLACHILTGEMVAIKIMDKNTLG</original>
    <variation>MMNFSNIMNYMKLLGQ</variation>
    <location>
        <begin position="1"/>
        <end position="48"/>
    </location>
</feature>
<feature type="splice variant" id="VSP_044715" description="In isoform 2." evidence="20">
    <location>
        <begin position="88"/>
        <end position="158"/>
    </location>
</feature>
<feature type="splice variant" id="VSP_046759" description="In isoform 8." evidence="20">
    <location>
        <begin position="88"/>
        <end position="135"/>
    </location>
</feature>
<feature type="splice variant" id="VSP_046760" description="In isoform 7." evidence="20">
    <location>
        <begin position="352"/>
        <end position="392"/>
    </location>
</feature>
<feature type="sequence variant" id="VAR_040794" description="In dbSNP:rs35233455." evidence="14">
    <original>T</original>
    <variation>M</variation>
    <location>
        <position position="56"/>
    </location>
</feature>
<feature type="sequence variant" id="VAR_040795" description="In dbSNP:rs35142210." evidence="14">
    <original>K</original>
    <variation>R</variation>
    <location>
        <position position="219"/>
    </location>
</feature>
<feature type="sequence variant" id="VAR_040796" description="In dbSNP:rs34655121." evidence="14">
    <original>R</original>
    <variation>K</variation>
    <location>
        <position position="333"/>
    </location>
</feature>
<feature type="sequence variant" id="VAR_040797" description="In dbSNP:rs55845414." evidence="14">
    <original>T</original>
    <variation>I</variation>
    <location>
        <position position="348"/>
    </location>
</feature>
<feature type="sequence variant" id="VAR_040798" description="In an ovarian mucinous carcinoma sample; somatic mutation; dbSNP:rs144052967." evidence="14">
    <original>T</original>
    <variation>M</variation>
    <location>
        <position position="460"/>
    </location>
</feature>
<feature type="mutagenesis site" description="Abolishes dependence to reducing agents; when associated with V-70; A-89; A-154; A-168; A-169; A-204; A-286 and A-339." evidence="11">
    <original>C</original>
    <variation>V</variation>
    <location>
        <position position="29"/>
    </location>
</feature>
<feature type="mutagenesis site" description="Abolishes dependence to reducing agents; when associated with V-29; A-89; A-154; A-168; A-169; A-204; A-286 and A-339." evidence="11">
    <original>C</original>
    <variation>V</variation>
    <location>
        <position position="70"/>
    </location>
</feature>
<feature type="mutagenesis site" description="Abolishes dependence to reducing agents; when associated with V-29; V-70; A-154; A-168; A-169; A-204; A-286 and A-339." evidence="11">
    <original>C</original>
    <variation>A</variation>
    <location>
        <position position="89"/>
    </location>
</feature>
<feature type="mutagenesis site" description="Abolishes enzymatic activity." evidence="7 11 13">
    <original>D</original>
    <variation>A</variation>
    <location>
        <position position="150"/>
    </location>
</feature>
<feature type="mutagenesis site" description="Abolishes dependence to reducing agents; when associated with V-29; V-70; A-89; A-168; A-169; A-204; A-286 and A-339." evidence="11">
    <original>C</original>
    <variation>A</variation>
    <location>
        <position position="154"/>
    </location>
</feature>
<feature type="mutagenesis site" description="Abolishes autophosphorylation on tyrosine but still active on exogenous substrates." evidence="11">
    <original>Y</original>
    <variation>F</variation>
    <location>
        <position position="163"/>
    </location>
</feature>
<feature type="mutagenesis site" description="Abolishes activation of serine/threonine-protein kinase activity and has only weak activity." evidence="8">
    <original>T</original>
    <variation>A</variation>
    <location>
        <position position="167"/>
    </location>
</feature>
<feature type="mutagenesis site" description="Phosphomimetic mutant that has similar kinase activity as wild-type." evidence="8">
    <original>T</original>
    <variation>D</variation>
    <variation>E</variation>
    <location>
        <position position="167"/>
    </location>
</feature>
<feature type="mutagenesis site" description="Abolishes dependence to reducing agents; when associated with V-29; V-70; A-89; A-154; A-169; A-204; A-286 and A-339." evidence="11">
    <original>C</original>
    <variation>A</variation>
    <location>
        <position position="168"/>
    </location>
</feature>
<feature type="mutagenesis site" description="Abolishes dependence to reducing agents; when associated with V-29; V-70; A-89; A-154; A-168; A-204; A-286 and A-339." evidence="11">
    <original>C</original>
    <variation>A</variation>
    <location>
        <position position="169"/>
    </location>
</feature>
<feature type="mutagenesis site" description="Abolishes activation of serine/threonine-protein kinase activity and has only weak activity." evidence="11">
    <original>S</original>
    <variation>A</variation>
    <location>
        <position position="171"/>
    </location>
</feature>
<feature type="mutagenesis site" description="Inactive." evidence="11">
    <original>S</original>
    <variation>D</variation>
    <location>
        <position position="171"/>
    </location>
</feature>
<feature type="mutagenesis site" description="Abolishes dependence to reducing agents; when associated with V-29; V-70; A-89; A-154; A-168; A-169; A-286 and A-339." evidence="11">
    <original>C</original>
    <variation>A</variation>
    <location>
        <position position="204"/>
    </location>
</feature>
<feature type="mutagenesis site" description="Inactive." evidence="11">
    <original>DDD</original>
    <variation>KKK</variation>
    <location>
        <begin position="283"/>
        <end position="285"/>
    </location>
</feature>
<feature type="mutagenesis site" description="Abolishes dependence to reducing agents; when associated with V-29; V-70; A-89; A-154; A-168; A-169; A-204; and A-339." evidence="11">
    <original>C</original>
    <variation>A</variation>
    <location>
        <position position="286"/>
    </location>
</feature>
<feature type="mutagenesis site" description="Abolishes dependence to reducing agents; when associated with V-29; V-70; A-89; A-154; A-168; A-169; A-204 and A-286." evidence="11">
    <original>C</original>
    <variation>A</variation>
    <location>
        <position position="339"/>
    </location>
</feature>
<feature type="mutagenesis site" description="No effect on interaction with PPP1R8." evidence="7">
    <original>T</original>
    <variation>A</variation>
    <location>
        <position position="345"/>
    </location>
</feature>
<feature type="mutagenesis site" description="No effect on interaction with PPP1R8." evidence="7">
    <original>T</original>
    <variation>A</variation>
    <location>
        <position position="387"/>
    </location>
</feature>
<feature type="mutagenesis site" description="No effect on interaction with PPP1R8." evidence="7">
    <original>T</original>
    <variation>A</variation>
    <location>
        <position position="409"/>
    </location>
</feature>
<feature type="mutagenesis site" description="No effect on interaction with PPP1R8." evidence="7">
    <original>T</original>
    <variation>A</variation>
    <location>
        <position position="415"/>
    </location>
</feature>
<feature type="mutagenesis site" description="No effect on interaction with PPP1R8." evidence="7">
    <original>T</original>
    <variation>A</variation>
    <location>
        <position position="428"/>
    </location>
</feature>
<feature type="mutagenesis site" description="Inhibits interaction with PPP1R8." evidence="7">
    <original>T</original>
    <variation>A</variation>
    <location>
        <position position="446"/>
    </location>
</feature>
<feature type="mutagenesis site" description="Inhibits interaction with PPP1R8." evidence="7">
    <original>T</original>
    <variation>A</variation>
    <location>
        <position position="460"/>
    </location>
</feature>
<feature type="mutagenesis site" description="Inhibits interaction with PPP1R8." evidence="7">
    <original>T</original>
    <variation>A</variation>
    <location>
        <position position="466"/>
    </location>
</feature>
<feature type="mutagenesis site" description="Strongly inhibits interaction with PPP1R8. Enhances enzymatic activity." evidence="7">
    <original>T</original>
    <variation>A</variation>
    <location>
        <position position="478"/>
    </location>
</feature>
<feature type="mutagenesis site" description="No effect on interaction with PPP1R8." evidence="7">
    <original>T</original>
    <variation>A</variation>
    <location>
        <position position="518"/>
    </location>
</feature>
<feature type="sequence conflict" description="In Ref. 3; BAH12961." evidence="22" ref="3">
    <original>I</original>
    <variation>M</variation>
    <location>
        <position position="69"/>
    </location>
</feature>
<feature type="sequence conflict" description="In Ref. 3; BAH12961." evidence="22" ref="3">
    <original>T</original>
    <variation>A</variation>
    <location>
        <position position="398"/>
    </location>
</feature>
<feature type="sequence conflict" description="In Ref. 3; BAH11482." evidence="22" ref="3">
    <original>T</original>
    <variation>A</variation>
    <location>
        <position position="428"/>
    </location>
</feature>
<feature type="sequence conflict" description="In Ref. 3; BAH13343." evidence="22" ref="3">
    <original>C</original>
    <variation>R</variation>
    <location>
        <position position="474"/>
    </location>
</feature>
<feature type="sequence conflict" description="In Ref. 3; BAH13354." evidence="22" ref="3">
    <original>P</original>
    <variation>L</variation>
    <location>
        <position position="483"/>
    </location>
</feature>
<feature type="turn" evidence="36">
    <location>
        <begin position="4"/>
        <end position="6"/>
    </location>
</feature>
<feature type="helix" evidence="41">
    <location>
        <begin position="7"/>
        <end position="9"/>
    </location>
</feature>
<feature type="strand" evidence="41">
    <location>
        <begin position="11"/>
        <end position="19"/>
    </location>
</feature>
<feature type="strand" evidence="38">
    <location>
        <begin position="20"/>
        <end position="22"/>
    </location>
</feature>
<feature type="strand" evidence="41">
    <location>
        <begin position="24"/>
        <end position="30"/>
    </location>
</feature>
<feature type="turn" evidence="41">
    <location>
        <begin position="31"/>
        <end position="33"/>
    </location>
</feature>
<feature type="strand" evidence="41">
    <location>
        <begin position="36"/>
        <end position="43"/>
    </location>
</feature>
<feature type="helix" evidence="41">
    <location>
        <begin position="44"/>
        <end position="47"/>
    </location>
</feature>
<feature type="helix" evidence="41">
    <location>
        <begin position="48"/>
        <end position="50"/>
    </location>
</feature>
<feature type="helix" evidence="41">
    <location>
        <begin position="51"/>
        <end position="62"/>
    </location>
</feature>
<feature type="strand" evidence="41">
    <location>
        <begin position="72"/>
        <end position="77"/>
    </location>
</feature>
<feature type="strand" evidence="41">
    <location>
        <begin position="79"/>
        <end position="87"/>
    </location>
</feature>
<feature type="helix" evidence="41">
    <location>
        <begin position="94"/>
        <end position="101"/>
    </location>
</feature>
<feature type="helix" evidence="41">
    <location>
        <begin position="106"/>
        <end position="125"/>
    </location>
</feature>
<feature type="helix" evidence="41">
    <location>
        <begin position="135"/>
        <end position="137"/>
    </location>
</feature>
<feature type="strand" evidence="41">
    <location>
        <begin position="138"/>
        <end position="140"/>
    </location>
</feature>
<feature type="strand" evidence="41">
    <location>
        <begin position="146"/>
        <end position="148"/>
    </location>
</feature>
<feature type="strand" evidence="40">
    <location>
        <begin position="157"/>
        <end position="159"/>
    </location>
</feature>
<feature type="strand" evidence="39">
    <location>
        <begin position="163"/>
        <end position="166"/>
    </location>
</feature>
<feature type="helix" evidence="41">
    <location>
        <begin position="172"/>
        <end position="174"/>
    </location>
</feature>
<feature type="helix" evidence="41">
    <location>
        <begin position="177"/>
        <end position="181"/>
    </location>
</feature>
<feature type="helix" evidence="41">
    <location>
        <begin position="187"/>
        <end position="204"/>
    </location>
</feature>
<feature type="helix" evidence="41">
    <location>
        <begin position="214"/>
        <end position="223"/>
    </location>
</feature>
<feature type="helix" evidence="41">
    <location>
        <begin position="234"/>
        <end position="243"/>
    </location>
</feature>
<feature type="helix" evidence="41">
    <location>
        <begin position="248"/>
        <end position="250"/>
    </location>
</feature>
<feature type="helix" evidence="41">
    <location>
        <begin position="254"/>
        <end position="258"/>
    </location>
</feature>
<feature type="helix" evidence="41">
    <location>
        <begin position="261"/>
        <end position="264"/>
    </location>
</feature>
<feature type="turn" evidence="41">
    <location>
        <begin position="265"/>
        <end position="267"/>
    </location>
</feature>
<feature type="strand" evidence="37">
    <location>
        <begin position="279"/>
        <end position="281"/>
    </location>
</feature>
<feature type="helix" evidence="41">
    <location>
        <begin position="284"/>
        <end position="291"/>
    </location>
</feature>
<feature type="strand" evidence="41">
    <location>
        <begin position="294"/>
        <end position="296"/>
    </location>
</feature>
<feature type="helix" evidence="41">
    <location>
        <begin position="298"/>
        <end position="306"/>
    </location>
</feature>
<feature type="helix" evidence="41">
    <location>
        <begin position="312"/>
        <end position="326"/>
    </location>
</feature>
<evidence type="ECO:0000250" key="1"/>
<evidence type="ECO:0000255" key="2">
    <source>
        <dbReference type="PROSITE-ProRule" id="PRU00159"/>
    </source>
</evidence>
<evidence type="ECO:0000255" key="3">
    <source>
        <dbReference type="PROSITE-ProRule" id="PRU00565"/>
    </source>
</evidence>
<evidence type="ECO:0000255" key="4">
    <source>
        <dbReference type="PROSITE-ProRule" id="PRU10027"/>
    </source>
</evidence>
<evidence type="ECO:0000269" key="5">
    <source>
    </source>
</evidence>
<evidence type="ECO:0000269" key="6">
    <source>
    </source>
</evidence>
<evidence type="ECO:0000269" key="7">
    <source>
    </source>
</evidence>
<evidence type="ECO:0000269" key="8">
    <source>
    </source>
</evidence>
<evidence type="ECO:0000269" key="9">
    <source>
    </source>
</evidence>
<evidence type="ECO:0000269" key="10">
    <source>
    </source>
</evidence>
<evidence type="ECO:0000269" key="11">
    <source>
    </source>
</evidence>
<evidence type="ECO:0000269" key="12">
    <source>
    </source>
</evidence>
<evidence type="ECO:0000269" key="13">
    <source>
    </source>
</evidence>
<evidence type="ECO:0000269" key="14">
    <source>
    </source>
</evidence>
<evidence type="ECO:0000269" key="15">
    <source>
    </source>
</evidence>
<evidence type="ECO:0000269" key="16">
    <source>
    </source>
</evidence>
<evidence type="ECO:0000269" key="17">
    <source>
    </source>
</evidence>
<evidence type="ECO:0000269" key="18">
    <source>
    </source>
</evidence>
<evidence type="ECO:0000269" key="19">
    <source>
    </source>
</evidence>
<evidence type="ECO:0000303" key="20">
    <source>
    </source>
</evidence>
<evidence type="ECO:0000303" key="21">
    <source ref="1"/>
</evidence>
<evidence type="ECO:0000305" key="22"/>
<evidence type="ECO:0000305" key="23">
    <source>
    </source>
</evidence>
<evidence type="ECO:0000305" key="24">
    <source>
    </source>
</evidence>
<evidence type="ECO:0000305" key="25">
    <source>
    </source>
</evidence>
<evidence type="ECO:0000305" key="26">
    <source>
    </source>
</evidence>
<evidence type="ECO:0000305" key="27">
    <source>
    </source>
</evidence>
<evidence type="ECO:0000305" key="28">
    <source>
    </source>
</evidence>
<evidence type="ECO:0000305" key="29">
    <source>
    </source>
</evidence>
<evidence type="ECO:0007744" key="30">
    <source>
    </source>
</evidence>
<evidence type="ECO:0007744" key="31">
    <source>
    </source>
</evidence>
<evidence type="ECO:0007744" key="32">
    <source>
    </source>
</evidence>
<evidence type="ECO:0007744" key="33">
    <source>
    </source>
</evidence>
<evidence type="ECO:0007744" key="34">
    <source>
    </source>
</evidence>
<evidence type="ECO:0007744" key="35">
    <source>
    </source>
</evidence>
<evidence type="ECO:0007829" key="36">
    <source>
        <dbReference type="PDB" id="4BKY"/>
    </source>
</evidence>
<evidence type="ECO:0007829" key="37">
    <source>
        <dbReference type="PDB" id="4BKZ"/>
    </source>
</evidence>
<evidence type="ECO:0007829" key="38">
    <source>
        <dbReference type="PDB" id="4D2T"/>
    </source>
</evidence>
<evidence type="ECO:0007829" key="39">
    <source>
        <dbReference type="PDB" id="4IXP"/>
    </source>
</evidence>
<evidence type="ECO:0007829" key="40">
    <source>
        <dbReference type="PDB" id="4UMP"/>
    </source>
</evidence>
<evidence type="ECO:0007829" key="41">
    <source>
        <dbReference type="PDB" id="5K00"/>
    </source>
</evidence>
<protein>
    <recommendedName>
        <fullName>Maternal embryonic leucine zipper kinase</fullName>
        <shortName>hMELK</shortName>
        <ecNumber>2.7.11.1</ecNumber>
    </recommendedName>
    <alternativeName>
        <fullName>Protein kinase Eg3</fullName>
        <shortName>pEg3 kinase</shortName>
    </alternativeName>
    <alternativeName>
        <fullName>Protein kinase PK38</fullName>
        <shortName>hPK38</shortName>
    </alternativeName>
    <alternativeName>
        <fullName>Tyrosine-protein kinase MELK</fullName>
        <ecNumber>2.7.10.2</ecNumber>
    </alternativeName>
</protein>
<reference key="1">
    <citation type="submission" date="2004-07" db="EMBL/GenBank/DDBJ databases">
        <title>Identification of MELK whose expression was highly up-regulated in breast cancers.</title>
        <authorList>
            <person name="Katagiri T."/>
            <person name="Lin M."/>
        </authorList>
    </citation>
    <scope>NUCLEOTIDE SEQUENCE [MRNA] (ISOFORMS 5 AND 6)</scope>
</reference>
<reference key="2">
    <citation type="journal article" date="1996" name="DNA Res.">
        <title>Prediction of the coding sequences of unidentified human genes. V. The coding sequences of 40 new genes (KIAA0161-KIAA0200) deduced by analysis of cDNA clones from human cell line KG-1.</title>
        <authorList>
            <person name="Nagase T."/>
            <person name="Seki N."/>
            <person name="Ishikawa K."/>
            <person name="Tanaka A."/>
            <person name="Nomura N."/>
        </authorList>
    </citation>
    <scope>NUCLEOTIDE SEQUENCE [LARGE SCALE MRNA] (ISOFORM 1)</scope>
    <scope>TISSUE SPECIFICITY</scope>
    <source>
        <tissue>Bone marrow</tissue>
    </source>
</reference>
<reference key="3">
    <citation type="journal article" date="2004" name="Nat. Genet.">
        <title>Complete sequencing and characterization of 21,243 full-length human cDNAs.</title>
        <authorList>
            <person name="Ota T."/>
            <person name="Suzuki Y."/>
            <person name="Nishikawa T."/>
            <person name="Otsuki T."/>
            <person name="Sugiyama T."/>
            <person name="Irie R."/>
            <person name="Wakamatsu A."/>
            <person name="Hayashi K."/>
            <person name="Sato H."/>
            <person name="Nagai K."/>
            <person name="Kimura K."/>
            <person name="Makita H."/>
            <person name="Sekine M."/>
            <person name="Obayashi M."/>
            <person name="Nishi T."/>
            <person name="Shibahara T."/>
            <person name="Tanaka T."/>
            <person name="Ishii S."/>
            <person name="Yamamoto J."/>
            <person name="Saito K."/>
            <person name="Kawai Y."/>
            <person name="Isono Y."/>
            <person name="Nakamura Y."/>
            <person name="Nagahari K."/>
            <person name="Murakami K."/>
            <person name="Yasuda T."/>
            <person name="Iwayanagi T."/>
            <person name="Wagatsuma M."/>
            <person name="Shiratori A."/>
            <person name="Sudo H."/>
            <person name="Hosoiri T."/>
            <person name="Kaku Y."/>
            <person name="Kodaira H."/>
            <person name="Kondo H."/>
            <person name="Sugawara M."/>
            <person name="Takahashi M."/>
            <person name="Kanda K."/>
            <person name="Yokoi T."/>
            <person name="Furuya T."/>
            <person name="Kikkawa E."/>
            <person name="Omura Y."/>
            <person name="Abe K."/>
            <person name="Kamihara K."/>
            <person name="Katsuta N."/>
            <person name="Sato K."/>
            <person name="Tanikawa M."/>
            <person name="Yamazaki M."/>
            <person name="Ninomiya K."/>
            <person name="Ishibashi T."/>
            <person name="Yamashita H."/>
            <person name="Murakawa K."/>
            <person name="Fujimori K."/>
            <person name="Tanai H."/>
            <person name="Kimata M."/>
            <person name="Watanabe M."/>
            <person name="Hiraoka S."/>
            <person name="Chiba Y."/>
            <person name="Ishida S."/>
            <person name="Ono Y."/>
            <person name="Takiguchi S."/>
            <person name="Watanabe S."/>
            <person name="Yosida M."/>
            <person name="Hotuta T."/>
            <person name="Kusano J."/>
            <person name="Kanehori K."/>
            <person name="Takahashi-Fujii A."/>
            <person name="Hara H."/>
            <person name="Tanase T.-O."/>
            <person name="Nomura Y."/>
            <person name="Togiya S."/>
            <person name="Komai F."/>
            <person name="Hara R."/>
            <person name="Takeuchi K."/>
            <person name="Arita M."/>
            <person name="Imose N."/>
            <person name="Musashino K."/>
            <person name="Yuuki H."/>
            <person name="Oshima A."/>
            <person name="Sasaki N."/>
            <person name="Aotsuka S."/>
            <person name="Yoshikawa Y."/>
            <person name="Matsunawa H."/>
            <person name="Ichihara T."/>
            <person name="Shiohata N."/>
            <person name="Sano S."/>
            <person name="Moriya S."/>
            <person name="Momiyama H."/>
            <person name="Satoh N."/>
            <person name="Takami S."/>
            <person name="Terashima Y."/>
            <person name="Suzuki O."/>
            <person name="Nakagawa S."/>
            <person name="Senoh A."/>
            <person name="Mizoguchi H."/>
            <person name="Goto Y."/>
            <person name="Shimizu F."/>
            <person name="Wakebe H."/>
            <person name="Hishigaki H."/>
            <person name="Watanabe T."/>
            <person name="Sugiyama A."/>
            <person name="Takemoto M."/>
            <person name="Kawakami B."/>
            <person name="Yamazaki M."/>
            <person name="Watanabe K."/>
            <person name="Kumagai A."/>
            <person name="Itakura S."/>
            <person name="Fukuzumi Y."/>
            <person name="Fujimori Y."/>
            <person name="Komiyama M."/>
            <person name="Tashiro H."/>
            <person name="Tanigami A."/>
            <person name="Fujiwara T."/>
            <person name="Ono T."/>
            <person name="Yamada K."/>
            <person name="Fujii Y."/>
            <person name="Ozaki K."/>
            <person name="Hirao M."/>
            <person name="Ohmori Y."/>
            <person name="Kawabata A."/>
            <person name="Hikiji T."/>
            <person name="Kobatake N."/>
            <person name="Inagaki H."/>
            <person name="Ikema Y."/>
            <person name="Okamoto S."/>
            <person name="Okitani R."/>
            <person name="Kawakami T."/>
            <person name="Noguchi S."/>
            <person name="Itoh T."/>
            <person name="Shigeta K."/>
            <person name="Senba T."/>
            <person name="Matsumura K."/>
            <person name="Nakajima Y."/>
            <person name="Mizuno T."/>
            <person name="Morinaga M."/>
            <person name="Sasaki M."/>
            <person name="Togashi T."/>
            <person name="Oyama M."/>
            <person name="Hata H."/>
            <person name="Watanabe M."/>
            <person name="Komatsu T."/>
            <person name="Mizushima-Sugano J."/>
            <person name="Satoh T."/>
            <person name="Shirai Y."/>
            <person name="Takahashi Y."/>
            <person name="Nakagawa K."/>
            <person name="Okumura K."/>
            <person name="Nagase T."/>
            <person name="Nomura N."/>
            <person name="Kikuchi H."/>
            <person name="Masuho Y."/>
            <person name="Yamashita R."/>
            <person name="Nakai K."/>
            <person name="Yada T."/>
            <person name="Nakamura Y."/>
            <person name="Ohara O."/>
            <person name="Isogai T."/>
            <person name="Sugano S."/>
        </authorList>
    </citation>
    <scope>NUCLEOTIDE SEQUENCE [LARGE SCALE MRNA] (ISOFORMS 2; 3; 4; 5; 7 AND 8)</scope>
    <source>
        <tissue>Spleen</tissue>
        <tissue>Testis</tissue>
    </source>
</reference>
<reference key="4">
    <citation type="journal article" date="2004" name="Nature">
        <title>DNA sequence and analysis of human chromosome 9.</title>
        <authorList>
            <person name="Humphray S.J."/>
            <person name="Oliver K."/>
            <person name="Hunt A.R."/>
            <person name="Plumb R.W."/>
            <person name="Loveland J.E."/>
            <person name="Howe K.L."/>
            <person name="Andrews T.D."/>
            <person name="Searle S."/>
            <person name="Hunt S.E."/>
            <person name="Scott C.E."/>
            <person name="Jones M.C."/>
            <person name="Ainscough R."/>
            <person name="Almeida J.P."/>
            <person name="Ambrose K.D."/>
            <person name="Ashwell R.I.S."/>
            <person name="Babbage A.K."/>
            <person name="Babbage S."/>
            <person name="Bagguley C.L."/>
            <person name="Bailey J."/>
            <person name="Banerjee R."/>
            <person name="Barker D.J."/>
            <person name="Barlow K.F."/>
            <person name="Bates K."/>
            <person name="Beasley H."/>
            <person name="Beasley O."/>
            <person name="Bird C.P."/>
            <person name="Bray-Allen S."/>
            <person name="Brown A.J."/>
            <person name="Brown J.Y."/>
            <person name="Burford D."/>
            <person name="Burrill W."/>
            <person name="Burton J."/>
            <person name="Carder C."/>
            <person name="Carter N.P."/>
            <person name="Chapman J.C."/>
            <person name="Chen Y."/>
            <person name="Clarke G."/>
            <person name="Clark S.Y."/>
            <person name="Clee C.M."/>
            <person name="Clegg S."/>
            <person name="Collier R.E."/>
            <person name="Corby N."/>
            <person name="Crosier M."/>
            <person name="Cummings A.T."/>
            <person name="Davies J."/>
            <person name="Dhami P."/>
            <person name="Dunn M."/>
            <person name="Dutta I."/>
            <person name="Dyer L.W."/>
            <person name="Earthrowl M.E."/>
            <person name="Faulkner L."/>
            <person name="Fleming C.J."/>
            <person name="Frankish A."/>
            <person name="Frankland J.A."/>
            <person name="French L."/>
            <person name="Fricker D.G."/>
            <person name="Garner P."/>
            <person name="Garnett J."/>
            <person name="Ghori J."/>
            <person name="Gilbert J.G.R."/>
            <person name="Glison C."/>
            <person name="Grafham D.V."/>
            <person name="Gribble S."/>
            <person name="Griffiths C."/>
            <person name="Griffiths-Jones S."/>
            <person name="Grocock R."/>
            <person name="Guy J."/>
            <person name="Hall R.E."/>
            <person name="Hammond S."/>
            <person name="Harley J.L."/>
            <person name="Harrison E.S.I."/>
            <person name="Hart E.A."/>
            <person name="Heath P.D."/>
            <person name="Henderson C.D."/>
            <person name="Hopkins B.L."/>
            <person name="Howard P.J."/>
            <person name="Howden P.J."/>
            <person name="Huckle E."/>
            <person name="Johnson C."/>
            <person name="Johnson D."/>
            <person name="Joy A.A."/>
            <person name="Kay M."/>
            <person name="Keenan S."/>
            <person name="Kershaw J.K."/>
            <person name="Kimberley A.M."/>
            <person name="King A."/>
            <person name="Knights A."/>
            <person name="Laird G.K."/>
            <person name="Langford C."/>
            <person name="Lawlor S."/>
            <person name="Leongamornlert D.A."/>
            <person name="Leversha M."/>
            <person name="Lloyd C."/>
            <person name="Lloyd D.M."/>
            <person name="Lovell J."/>
            <person name="Martin S."/>
            <person name="Mashreghi-Mohammadi M."/>
            <person name="Matthews L."/>
            <person name="McLaren S."/>
            <person name="McLay K.E."/>
            <person name="McMurray A."/>
            <person name="Milne S."/>
            <person name="Nickerson T."/>
            <person name="Nisbett J."/>
            <person name="Nordsiek G."/>
            <person name="Pearce A.V."/>
            <person name="Peck A.I."/>
            <person name="Porter K.M."/>
            <person name="Pandian R."/>
            <person name="Pelan S."/>
            <person name="Phillimore B."/>
            <person name="Povey S."/>
            <person name="Ramsey Y."/>
            <person name="Rand V."/>
            <person name="Scharfe M."/>
            <person name="Sehra H.K."/>
            <person name="Shownkeen R."/>
            <person name="Sims S.K."/>
            <person name="Skuce C.D."/>
            <person name="Smith M."/>
            <person name="Steward C.A."/>
            <person name="Swarbreck D."/>
            <person name="Sycamore N."/>
            <person name="Tester J."/>
            <person name="Thorpe A."/>
            <person name="Tracey A."/>
            <person name="Tromans A."/>
            <person name="Thomas D.W."/>
            <person name="Wall M."/>
            <person name="Wallis J.M."/>
            <person name="West A.P."/>
            <person name="Whitehead S.L."/>
            <person name="Willey D.L."/>
            <person name="Williams S.A."/>
            <person name="Wilming L."/>
            <person name="Wray P.W."/>
            <person name="Young L."/>
            <person name="Ashurst J.L."/>
            <person name="Coulson A."/>
            <person name="Blocker H."/>
            <person name="Durbin R.M."/>
            <person name="Sulston J.E."/>
            <person name="Hubbard T."/>
            <person name="Jackson M.J."/>
            <person name="Bentley D.R."/>
            <person name="Beck S."/>
            <person name="Rogers J."/>
            <person name="Dunham I."/>
        </authorList>
    </citation>
    <scope>NUCLEOTIDE SEQUENCE [LARGE SCALE GENOMIC DNA]</scope>
</reference>
<reference key="5">
    <citation type="submission" date="2005-09" db="EMBL/GenBank/DDBJ databases">
        <authorList>
            <person name="Mural R.J."/>
            <person name="Istrail S."/>
            <person name="Sutton G.G."/>
            <person name="Florea L."/>
            <person name="Halpern A.L."/>
            <person name="Mobarry C.M."/>
            <person name="Lippert R."/>
            <person name="Walenz B."/>
            <person name="Shatkay H."/>
            <person name="Dew I."/>
            <person name="Miller J.R."/>
            <person name="Flanigan M.J."/>
            <person name="Edwards N.J."/>
            <person name="Bolanos R."/>
            <person name="Fasulo D."/>
            <person name="Halldorsson B.V."/>
            <person name="Hannenhalli S."/>
            <person name="Turner R."/>
            <person name="Yooseph S."/>
            <person name="Lu F."/>
            <person name="Nusskern D.R."/>
            <person name="Shue B.C."/>
            <person name="Zheng X.H."/>
            <person name="Zhong F."/>
            <person name="Delcher A.L."/>
            <person name="Huson D.H."/>
            <person name="Kravitz S.A."/>
            <person name="Mouchard L."/>
            <person name="Reinert K."/>
            <person name="Remington K.A."/>
            <person name="Clark A.G."/>
            <person name="Waterman M.S."/>
            <person name="Eichler E.E."/>
            <person name="Adams M.D."/>
            <person name="Hunkapiller M.W."/>
            <person name="Myers E.W."/>
            <person name="Venter J.C."/>
        </authorList>
    </citation>
    <scope>NUCLEOTIDE SEQUENCE [LARGE SCALE GENOMIC DNA]</scope>
</reference>
<reference key="6">
    <citation type="journal article" date="2004" name="Genome Res.">
        <title>The status, quality, and expansion of the NIH full-length cDNA project: the Mammalian Gene Collection (MGC).</title>
        <authorList>
            <consortium name="The MGC Project Team"/>
        </authorList>
    </citation>
    <scope>NUCLEOTIDE SEQUENCE [LARGE SCALE MRNA] (ISOFORM 1)</scope>
    <source>
        <tissue>Colon</tissue>
    </source>
</reference>
<reference key="7">
    <citation type="journal article" date="2002" name="Biochem. J.">
        <title>Phosphorylation of a novel zinc-finger-like protein, ZPR9, by murine protein serine/threonine kinase 38 (MPK38).</title>
        <authorList>
            <person name="Seong H.-A."/>
            <person name="Gil M."/>
            <person name="Kim K.-T."/>
            <person name="Kim S.-J."/>
            <person name="Ha H."/>
        </authorList>
    </citation>
    <scope>INTERACTION WITH ZNF622</scope>
    <scope>FUNCTION IN PHOSPHORYLATION OF ZNF622</scope>
    <source>
        <tissue>Keratinocyte</tissue>
    </source>
</reference>
<reference key="8">
    <citation type="journal article" date="2002" name="Oncogene">
        <title>Human pEg3 kinase associates with and phosphorylates CDC25B phosphatase: a potential role for pEg3 in cell cycle regulation.</title>
        <authorList>
            <person name="Davezac N."/>
            <person name="Baldin V."/>
            <person name="Blot J."/>
            <person name="Ducommun B."/>
            <person name="Tassan J.P."/>
        </authorList>
    </citation>
    <scope>FUNCTION IN PHOSPHORYLATION OF CDC25B</scope>
</reference>
<reference key="9">
    <citation type="journal article" date="2004" name="J. Biol. Chem.">
        <title>Inhibition of spliceosome assembly by the cell cycle-regulated protein kinase MELK and involvement of splicing factor NIPP1.</title>
        <authorList>
            <person name="Vulsteke V."/>
            <person name="Beullens M."/>
            <person name="Boudrez A."/>
            <person name="Keppens S."/>
            <person name="Van Eynde A."/>
            <person name="Rider M.H."/>
            <person name="Stalmans W."/>
            <person name="Bollen M."/>
        </authorList>
    </citation>
    <scope>INTERACTION WITH PPP1R8</scope>
    <scope>AUTOPHOSPHORYLATION</scope>
    <scope>MUTAGENESIS OF ASP-150; THR-345; THR-387; THR-409; THR-415; THR-428; THR-446; THR-460; THR-466; THR-478 AND THR-518</scope>
    <scope>PHOSPHORYLATION AT THR-478</scope>
    <scope>FUNCTION</scope>
</reference>
<reference key="10">
    <citation type="journal article" date="2004" name="EMBO J.">
        <title>LKB1 is a master kinase that activates 13 kinases of the AMPK subfamily, including MARK/PAR-1.</title>
        <authorList>
            <person name="Lizcano J.M."/>
            <person name="Goeransson O."/>
            <person name="Toth R."/>
            <person name="Deak M."/>
            <person name="Morrice N.A."/>
            <person name="Boudeau J."/>
            <person name="Hawley S.A."/>
            <person name="Udd L."/>
            <person name="Maekelae T.P."/>
            <person name="Hardie D.G."/>
            <person name="Alessi D.R."/>
        </authorList>
    </citation>
    <scope>PHOSPHORYLATION AT THR-167</scope>
    <scope>AUTOPHOSPHORYLATION</scope>
    <scope>MUTAGENESIS OF THR-167</scope>
</reference>
<reference key="11">
    <citation type="journal article" date="2005" name="Cancer Res.">
        <title>Maternal embryonic leucine zipper kinase/murine protein serine-threonine kinase 38 is a promising therapeutic target for multiple cancers.</title>
        <authorList>
            <person name="Gray D."/>
            <person name="Jubb A.M."/>
            <person name="Hogue D."/>
            <person name="Dowd P."/>
            <person name="Kljavin N."/>
            <person name="Yi S."/>
            <person name="Bai W."/>
            <person name="Frantz G."/>
            <person name="Zhang Z."/>
            <person name="Koeppen H."/>
            <person name="de Sauvage F.J."/>
            <person name="Davis D.P."/>
        </authorList>
    </citation>
    <scope>INVOLVEMENT IN CANCER</scope>
</reference>
<reference key="12">
    <citation type="journal article" date="2005" name="Cell Cycle">
        <title>CDC25B phosphorylated by pEg3 localizes to the centrosome and the spindle poles at mitosis.</title>
        <authorList>
            <person name="Mirey G."/>
            <person name="Chartrain I."/>
            <person name="Froment C."/>
            <person name="Quaranta M."/>
            <person name="Bouche J.P."/>
            <person name="Monsarrat B."/>
            <person name="Tassan J.P."/>
            <person name="Ducommun B."/>
        </authorList>
    </citation>
    <scope>FUNCTION IN PHOSPHORYLATION OF CDC25B</scope>
</reference>
<reference key="13">
    <citation type="journal article" date="2006" name="Cell">
        <title>Global, in vivo, and site-specific phosphorylation dynamics in signaling networks.</title>
        <authorList>
            <person name="Olsen J.V."/>
            <person name="Blagoev B."/>
            <person name="Gnad F."/>
            <person name="Macek B."/>
            <person name="Kumar C."/>
            <person name="Mortensen P."/>
            <person name="Mann M."/>
        </authorList>
    </citation>
    <scope>PHOSPHORYLATION [LARGE SCALE ANALYSIS] AT SER-505</scope>
    <scope>IDENTIFICATION BY MASS SPECTROMETRY [LARGE SCALE ANALYSIS]</scope>
    <source>
        <tissue>Cervix carcinoma</tissue>
    </source>
</reference>
<reference key="14">
    <citation type="journal article" date="2006" name="Cell Cycle">
        <title>M-phase MELK activity is regulated by MPF and MAPK.</title>
        <authorList>
            <person name="Badouel C."/>
            <person name="Korner R."/>
            <person name="Frank-Vaillant M."/>
            <person name="Couturier A."/>
            <person name="Nigg E.A."/>
            <person name="Tassan J.P."/>
        </authorList>
    </citation>
    <scope>PHOSPHORYLATION AT THR-167; SER-343; SER-356; TYR-367; THR-398; THR-409; SER-431; THR-494; SER-505 AND SER-529</scope>
</reference>
<reference key="15">
    <citation type="journal article" date="2005" name="J. Biol. Chem.">
        <title>Substrate specificity and activity regulation of protein kinase MELK.</title>
        <authorList>
            <person name="Beullens M."/>
            <person name="Vancauwenbergh S."/>
            <person name="Morrice N."/>
            <person name="Derua R."/>
            <person name="Ceulemans H."/>
            <person name="Waelkens E."/>
            <person name="Bollen M."/>
        </authorList>
    </citation>
    <scope>FUNCTION</scope>
    <scope>CATALYTIC ACTIVITY</scope>
    <scope>ACTIVITY REGULATION</scope>
    <scope>AUTOPHOSPHORYLATION</scope>
    <scope>CALCIUM-BINDING</scope>
    <scope>PHOSPHORYLATION AT THR-56; TYR-163; THR-167; SER-171; SER-253; SER-336; SER-343; SER-356; SER-391; THR-398; SER-407; SER-431; THR-494; SER-505; SER-529 AND THR-539</scope>
    <scope>MUTAGENESIS OF CYS-29; CYS-70; CYS-89; ASP-150; CYS-154; TYR-163; CYS-168; CYS-169; SER-171; CYS-204; 283-ASP--ASP-285; CYS-286 AND CYS-339</scope>
</reference>
<reference key="16">
    <citation type="journal article" date="2006" name="Biol. Cell">
        <title>Cell-cycle-dependent cortical localization of pEg3 protein kinase in Xenopus and human cells.</title>
        <authorList>
            <person name="Chartrain I."/>
            <person name="Couturier A."/>
            <person name="Tassan J.P."/>
        </authorList>
    </citation>
    <scope>SUBCELLULAR LOCATION</scope>
</reference>
<reference key="17">
    <citation type="journal article" date="2007" name="Breast Cancer Res.">
        <title>Involvement of maternal embryonic leucine zipper kinase (MELK) in mammary carcinogenesis through interaction with Bcl-G, a pro-apoptotic member of the Bcl-2 family.</title>
        <authorList>
            <person name="Lin M.L."/>
            <person name="Park J.H."/>
            <person name="Nishidate T."/>
            <person name="Nakamura Y."/>
            <person name="Katagiri T."/>
        </authorList>
    </citation>
    <scope>FUNCTION IN PHOSPHORYLATION OF BCL2L14</scope>
    <scope>MUTAGENESIS OF ASP-150</scope>
</reference>
<reference key="18">
    <citation type="journal article" date="2008" name="Int. J. Cancer">
        <title>Maternal embryonic leucine zipper kinase transcript abundance correlates with malignancy grade in human astrocytomas.</title>
        <authorList>
            <person name="Marie S.K."/>
            <person name="Okamoto O.K."/>
            <person name="Uno M."/>
            <person name="Hasegawa A.P."/>
            <person name="Oba-Shinjo S.M."/>
            <person name="Cohen T."/>
            <person name="Camargo A.A."/>
            <person name="Kosoy A."/>
            <person name="Carlotti C.G. Jr."/>
            <person name="Toledo S."/>
            <person name="Moreira-Filho C.A."/>
            <person name="Zago M.A."/>
            <person name="Simpson A.J."/>
            <person name="Caballero O.L."/>
        </authorList>
    </citation>
    <scope>INVOLVEMENT IN CANCER</scope>
</reference>
<reference key="19">
    <citation type="journal article" date="2008" name="J. Neurosci. Res.">
        <title>Maternal embryonic leucine zipper kinase is a key regulator of the proliferation of malignant brain tumors, including brain tumor stem cells.</title>
        <authorList>
            <person name="Nakano I."/>
            <person name="Masterman-Smith M."/>
            <person name="Saigusa K."/>
            <person name="Paucar A.A."/>
            <person name="Horvath S."/>
            <person name="Shoemaker L."/>
            <person name="Watanabe M."/>
            <person name="Negro A."/>
            <person name="Bajpai R."/>
            <person name="Howes A."/>
            <person name="Lelievre V."/>
            <person name="Waschek J.A."/>
            <person name="Lazareff J.A."/>
            <person name="Freije W.A."/>
            <person name="Liau L.M."/>
            <person name="Gilbertson R.J."/>
            <person name="Cloughesy T.F."/>
            <person name="Geschwind D.H."/>
            <person name="Nelson S.F."/>
            <person name="Mischel P.S."/>
            <person name="Terskikh A.V."/>
            <person name="Kornblum H.I."/>
        </authorList>
    </citation>
    <scope>INVOLVEMENT IN CANCER</scope>
</reference>
<reference key="20">
    <citation type="journal article" date="2008" name="Mol. Cell">
        <title>Kinase-selective enrichment enables quantitative phosphoproteomics of the kinome across the cell cycle.</title>
        <authorList>
            <person name="Daub H."/>
            <person name="Olsen J.V."/>
            <person name="Bairlein M."/>
            <person name="Gnad F."/>
            <person name="Oppermann F.S."/>
            <person name="Korner R."/>
            <person name="Greff Z."/>
            <person name="Keri G."/>
            <person name="Stemmann O."/>
            <person name="Mann M."/>
        </authorList>
    </citation>
    <scope>PHOSPHORYLATION [LARGE SCALE ANALYSIS] AT SER-356; SER-498; SER-505; THR-518 AND SER-529</scope>
    <scope>IDENTIFICATION BY MASS SPECTROMETRY [LARGE SCALE ANALYSIS]</scope>
    <source>
        <tissue>Cervix carcinoma</tissue>
    </source>
</reference>
<reference key="21">
    <citation type="journal article" date="2008" name="Proc. Natl. Acad. Sci. U.S.A.">
        <title>A quantitative atlas of mitotic phosphorylation.</title>
        <authorList>
            <person name="Dephoure N."/>
            <person name="Zhou C."/>
            <person name="Villen J."/>
            <person name="Beausoleil S.A."/>
            <person name="Bakalarski C.E."/>
            <person name="Elledge S.J."/>
            <person name="Gygi S.P."/>
        </authorList>
    </citation>
    <scope>PHOSPHORYLATION [LARGE SCALE ANALYSIS] AT SER-431 AND SER-505</scope>
    <scope>IDENTIFICATION BY MASS SPECTROMETRY [LARGE SCALE ANALYSIS]</scope>
    <source>
        <tissue>Cervix carcinoma</tissue>
    </source>
</reference>
<reference key="22">
    <citation type="journal article" date="2009" name="Breast Cancer Res.">
        <title>Dysregulated expression of Fau and MELK is associated with poor prognosis in breast cancer.</title>
        <authorList>
            <person name="Pickard M.R."/>
            <person name="Green A.R."/>
            <person name="Ellis I.O."/>
            <person name="Caldas C."/>
            <person name="Hedge V.L."/>
            <person name="Mourtada-Maarabouni M."/>
            <person name="Williams G.T."/>
        </authorList>
    </citation>
    <scope>INVOLVEMENT IN CANCER</scope>
</reference>
<reference key="23">
    <citation type="journal article" date="2009" name="Mol. Cell. Proteomics">
        <title>Large-scale proteomics analysis of the human kinome.</title>
        <authorList>
            <person name="Oppermann F.S."/>
            <person name="Gnad F."/>
            <person name="Olsen J.V."/>
            <person name="Hornberger R."/>
            <person name="Greff Z."/>
            <person name="Keri G."/>
            <person name="Mann M."/>
            <person name="Daub H."/>
        </authorList>
    </citation>
    <scope>PHOSPHORYLATION [LARGE SCALE ANALYSIS] AT SER-356; SER-498; SER-505 AND SER-529</scope>
    <scope>IDENTIFICATION BY MASS SPECTROMETRY [LARGE SCALE ANALYSIS]</scope>
</reference>
<reference key="24">
    <citation type="journal article" date="2009" name="Sci. Signal.">
        <title>Quantitative phosphoproteomic analysis of T cell receptor signaling reveals system-wide modulation of protein-protein interactions.</title>
        <authorList>
            <person name="Mayya V."/>
            <person name="Lundgren D.H."/>
            <person name="Hwang S.-I."/>
            <person name="Rezaul K."/>
            <person name="Wu L."/>
            <person name="Eng J.K."/>
            <person name="Rodionov V."/>
            <person name="Han D.K."/>
        </authorList>
    </citation>
    <scope>PHOSPHORYLATION [LARGE SCALE ANALYSIS] AT SER-356</scope>
    <scope>IDENTIFICATION BY MASS SPECTROMETRY [LARGE SCALE ANALYSIS]</scope>
    <source>
        <tissue>Leukemic T-cell</tissue>
    </source>
</reference>
<reference key="25">
    <citation type="journal article" date="2010" name="Cancer Res.">
        <title>Maternal embryonic leucine zipper kinase is upregulated and required in mammary tumor-initiating cells in vivo.</title>
        <authorList>
            <person name="Hebbard L.W."/>
            <person name="Maurer J."/>
            <person name="Miller A."/>
            <person name="Lesperance J."/>
            <person name="Hassell J."/>
            <person name="Oshima R.G."/>
            <person name="Terskikh A.V."/>
        </authorList>
    </citation>
    <scope>INVOLVEMENT IN CANCER</scope>
</reference>
<reference key="26">
    <citation type="journal article" date="2010" name="Cell">
        <title>Kinase associated-1 domains drive MARK/PAR1 kinases to membrane targets by binding acidic phospholipids.</title>
        <authorList>
            <person name="Moravcevic K."/>
            <person name="Mendrola J.M."/>
            <person name="Schmitz K.R."/>
            <person name="Wang Y.H."/>
            <person name="Slochower D."/>
            <person name="Janmey P.A."/>
            <person name="Lemmon M.A."/>
        </authorList>
    </citation>
    <scope>SUBCELLULAR LOCATION</scope>
</reference>
<reference key="27">
    <citation type="journal article" date="2010" name="Exp. Cell Res.">
        <title>Maternal embryonic leucine zipper kinase is stabilized in mitosis by phosphorylation and is partially degraded upon mitotic exit.</title>
        <authorList>
            <person name="Badouel C."/>
            <person name="Chartrain I."/>
            <person name="Blot J."/>
            <person name="Tassan J.P."/>
        </authorList>
    </citation>
    <scope>DEVELOPMENTAL STAGE</scope>
    <scope>PHOSPHORYLATION</scope>
</reference>
<reference key="28">
    <citation type="journal article" date="2011" name="Biochem. Biophys. Res. Commun.">
        <title>Resistance of colorectal cancer cells to radiation and 5-FU is associated with MELK expression.</title>
        <authorList>
            <person name="Choi S."/>
            <person name="Ku J.L."/>
        </authorList>
    </citation>
    <scope>INDUCTION</scope>
</reference>
<reference key="29">
    <citation type="journal article" date="2011" name="Neuro-oncol.">
        <title>Siomycin A targets brain tumor stem cells partially through a MELK-mediated pathway.</title>
        <authorList>
            <person name="Nakano I."/>
            <person name="Joshi K."/>
            <person name="Visnyei K."/>
            <person name="Hu B."/>
            <person name="Watanabe M."/>
            <person name="Lam D."/>
            <person name="Wexler E."/>
            <person name="Saigusa K."/>
            <person name="Nakamura Y."/>
            <person name="Laks D.R."/>
            <person name="Mischel P.S."/>
            <person name="Viapiano M."/>
            <person name="Kornblum H.I."/>
        </authorList>
    </citation>
    <scope>INDUCTION</scope>
</reference>
<reference key="30">
    <citation type="journal article" date="2013" name="J. Proteome Res.">
        <title>Toward a comprehensive characterization of a human cancer cell phosphoproteome.</title>
        <authorList>
            <person name="Zhou H."/>
            <person name="Di Palma S."/>
            <person name="Preisinger C."/>
            <person name="Peng M."/>
            <person name="Polat A.N."/>
            <person name="Heck A.J."/>
            <person name="Mohammed S."/>
        </authorList>
    </citation>
    <scope>PHOSPHORYLATION [LARGE SCALE ANALYSIS] AT SER-356; SER-498; SER-505 AND SER-529</scope>
    <scope>IDENTIFICATION BY MASS SPECTROMETRY [LARGE SCALE ANALYSIS]</scope>
    <source>
        <tissue>Cervix carcinoma</tissue>
        <tissue>Erythroleukemia</tissue>
    </source>
</reference>
<reference key="31">
    <citation type="journal article" date="2007" name="Nature">
        <title>Patterns of somatic mutation in human cancer genomes.</title>
        <authorList>
            <person name="Greenman C."/>
            <person name="Stephens P."/>
            <person name="Smith R."/>
            <person name="Dalgliesh G.L."/>
            <person name="Hunter C."/>
            <person name="Bignell G."/>
            <person name="Davies H."/>
            <person name="Teague J."/>
            <person name="Butler A."/>
            <person name="Stevens C."/>
            <person name="Edkins S."/>
            <person name="O'Meara S."/>
            <person name="Vastrik I."/>
            <person name="Schmidt E.E."/>
            <person name="Avis T."/>
            <person name="Barthorpe S."/>
            <person name="Bhamra G."/>
            <person name="Buck G."/>
            <person name="Choudhury B."/>
            <person name="Clements J."/>
            <person name="Cole J."/>
            <person name="Dicks E."/>
            <person name="Forbes S."/>
            <person name="Gray K."/>
            <person name="Halliday K."/>
            <person name="Harrison R."/>
            <person name="Hills K."/>
            <person name="Hinton J."/>
            <person name="Jenkinson A."/>
            <person name="Jones D."/>
            <person name="Menzies A."/>
            <person name="Mironenko T."/>
            <person name="Perry J."/>
            <person name="Raine K."/>
            <person name="Richardson D."/>
            <person name="Shepherd R."/>
            <person name="Small A."/>
            <person name="Tofts C."/>
            <person name="Varian J."/>
            <person name="Webb T."/>
            <person name="West S."/>
            <person name="Widaa S."/>
            <person name="Yates A."/>
            <person name="Cahill D.P."/>
            <person name="Louis D.N."/>
            <person name="Goldstraw P."/>
            <person name="Nicholson A.G."/>
            <person name="Brasseur F."/>
            <person name="Looijenga L."/>
            <person name="Weber B.L."/>
            <person name="Chiew Y.-E."/>
            <person name="DeFazio A."/>
            <person name="Greaves M.F."/>
            <person name="Green A.R."/>
            <person name="Campbell P."/>
            <person name="Birney E."/>
            <person name="Easton D.F."/>
            <person name="Chenevix-Trench G."/>
            <person name="Tan M.-H."/>
            <person name="Khoo S.K."/>
            <person name="Teh B.T."/>
            <person name="Yuen S.T."/>
            <person name="Leung S.Y."/>
            <person name="Wooster R."/>
            <person name="Futreal P.A."/>
            <person name="Stratton M.R."/>
        </authorList>
    </citation>
    <scope>VARIANTS [LARGE SCALE ANALYSIS] MET-56; ARG-219; LYS-333; ILE-348 AND MET-460</scope>
</reference>
<proteinExistence type="evidence at protein level"/>
<organism>
    <name type="scientific">Homo sapiens</name>
    <name type="common">Human</name>
    <dbReference type="NCBI Taxonomy" id="9606"/>
    <lineage>
        <taxon>Eukaryota</taxon>
        <taxon>Metazoa</taxon>
        <taxon>Chordata</taxon>
        <taxon>Craniata</taxon>
        <taxon>Vertebrata</taxon>
        <taxon>Euteleostomi</taxon>
        <taxon>Mammalia</taxon>
        <taxon>Eutheria</taxon>
        <taxon>Euarchontoglires</taxon>
        <taxon>Primates</taxon>
        <taxon>Haplorrhini</taxon>
        <taxon>Catarrhini</taxon>
        <taxon>Hominidae</taxon>
        <taxon>Homo</taxon>
    </lineage>
</organism>
<keyword id="KW-0002">3D-structure</keyword>
<keyword id="KW-0025">Alternative splicing</keyword>
<keyword id="KW-0053">Apoptosis</keyword>
<keyword id="KW-0067">ATP-binding</keyword>
<keyword id="KW-0106">Calcium</keyword>
<keyword id="KW-0131">Cell cycle</keyword>
<keyword id="KW-1003">Cell membrane</keyword>
<keyword id="KW-0418">Kinase</keyword>
<keyword id="KW-0446">Lipid-binding</keyword>
<keyword id="KW-0472">Membrane</keyword>
<keyword id="KW-0547">Nucleotide-binding</keyword>
<keyword id="KW-0597">Phosphoprotein</keyword>
<keyword id="KW-1267">Proteomics identification</keyword>
<keyword id="KW-1185">Reference proteome</keyword>
<keyword id="KW-0723">Serine/threonine-protein kinase</keyword>
<keyword id="KW-0808">Transferase</keyword>